<organism>
    <name type="scientific">Homo sapiens</name>
    <name type="common">Human</name>
    <dbReference type="NCBI Taxonomy" id="9606"/>
    <lineage>
        <taxon>Eukaryota</taxon>
        <taxon>Metazoa</taxon>
        <taxon>Chordata</taxon>
        <taxon>Craniata</taxon>
        <taxon>Vertebrata</taxon>
        <taxon>Euteleostomi</taxon>
        <taxon>Mammalia</taxon>
        <taxon>Eutheria</taxon>
        <taxon>Euarchontoglires</taxon>
        <taxon>Primates</taxon>
        <taxon>Haplorrhini</taxon>
        <taxon>Catarrhini</taxon>
        <taxon>Hominidae</taxon>
        <taxon>Homo</taxon>
    </lineage>
</organism>
<name>SMCA2_HUMAN</name>
<proteinExistence type="evidence at protein level"/>
<gene>
    <name evidence="36" type="primary">SMARCA2</name>
    <name type="synonym">BAF190B</name>
    <name type="synonym">BRM</name>
    <name type="synonym">SNF2A</name>
    <name type="synonym">SNF2L2</name>
</gene>
<feature type="chain" id="PRO_0000074352" description="SWI/SNF-related matrix-associated actin-dependent regulator of chromatin subfamily A member 2">
    <location>
        <begin position="1"/>
        <end position="1590"/>
    </location>
</feature>
<feature type="domain" description="QLQ" evidence="7">
    <location>
        <begin position="173"/>
        <end position="208"/>
    </location>
</feature>
<feature type="domain" description="HSA" evidence="6">
    <location>
        <begin position="436"/>
        <end position="508"/>
    </location>
</feature>
<feature type="domain" description="Helicase ATP-binding" evidence="4">
    <location>
        <begin position="736"/>
        <end position="901"/>
    </location>
</feature>
<feature type="domain" description="Helicase C-terminal" evidence="5">
    <location>
        <begin position="1054"/>
        <end position="1216"/>
    </location>
</feature>
<feature type="domain" description="Bromo" evidence="3">
    <location>
        <begin position="1378"/>
        <end position="1506"/>
    </location>
</feature>
<feature type="region of interest" description="Disordered" evidence="8">
    <location>
        <begin position="1"/>
        <end position="71"/>
    </location>
</feature>
<feature type="region of interest" description="Disordered" evidence="8">
    <location>
        <begin position="95"/>
        <end position="176"/>
    </location>
</feature>
<feature type="region of interest" description="Disordered" evidence="8">
    <location>
        <begin position="212"/>
        <end position="334"/>
    </location>
</feature>
<feature type="region of interest" description="Disordered" evidence="8">
    <location>
        <begin position="551"/>
        <end position="592"/>
    </location>
</feature>
<feature type="region of interest" description="Disordered" evidence="8">
    <location>
        <begin position="627"/>
        <end position="672"/>
    </location>
</feature>
<feature type="region of interest" description="Disordered" evidence="8">
    <location>
        <begin position="1344"/>
        <end position="1383"/>
    </location>
</feature>
<feature type="region of interest" description="Disordered" evidence="8">
    <location>
        <begin position="1506"/>
        <end position="1590"/>
    </location>
</feature>
<feature type="short sequence motif" description="DEGH box">
    <location>
        <begin position="851"/>
        <end position="854"/>
    </location>
</feature>
<feature type="compositionally biased region" description="Pro residues" evidence="8">
    <location>
        <begin position="10"/>
        <end position="36"/>
    </location>
</feature>
<feature type="compositionally biased region" description="Low complexity" evidence="8">
    <location>
        <begin position="37"/>
        <end position="46"/>
    </location>
</feature>
<feature type="compositionally biased region" description="Pro residues" evidence="8">
    <location>
        <begin position="101"/>
        <end position="111"/>
    </location>
</feature>
<feature type="compositionally biased region" description="Pro residues" evidence="8">
    <location>
        <begin position="143"/>
        <end position="152"/>
    </location>
</feature>
<feature type="compositionally biased region" description="Low complexity" evidence="8">
    <location>
        <begin position="216"/>
        <end position="240"/>
    </location>
</feature>
<feature type="compositionally biased region" description="Low complexity" evidence="8">
    <location>
        <begin position="262"/>
        <end position="275"/>
    </location>
</feature>
<feature type="compositionally biased region" description="Pro residues" evidence="8">
    <location>
        <begin position="278"/>
        <end position="295"/>
    </location>
</feature>
<feature type="compositionally biased region" description="Pro residues" evidence="8">
    <location>
        <begin position="305"/>
        <end position="315"/>
    </location>
</feature>
<feature type="compositionally biased region" description="Polar residues" evidence="8">
    <location>
        <begin position="319"/>
        <end position="329"/>
    </location>
</feature>
<feature type="compositionally biased region" description="Basic residues" evidence="8">
    <location>
        <begin position="555"/>
        <end position="564"/>
    </location>
</feature>
<feature type="compositionally biased region" description="Acidic residues" evidence="8">
    <location>
        <begin position="636"/>
        <end position="650"/>
    </location>
</feature>
<feature type="compositionally biased region" description="Basic and acidic residues" evidence="8">
    <location>
        <begin position="651"/>
        <end position="661"/>
    </location>
</feature>
<feature type="compositionally biased region" description="Basic and acidic residues" evidence="8">
    <location>
        <begin position="1352"/>
        <end position="1363"/>
    </location>
</feature>
<feature type="compositionally biased region" description="Acidic residues" evidence="8">
    <location>
        <begin position="1510"/>
        <end position="1529"/>
    </location>
</feature>
<feature type="compositionally biased region" description="Basic and acidic residues" evidence="8">
    <location>
        <begin position="1542"/>
        <end position="1551"/>
    </location>
</feature>
<feature type="compositionally biased region" description="Basic residues" evidence="8">
    <location>
        <begin position="1552"/>
        <end position="1563"/>
    </location>
</feature>
<feature type="compositionally biased region" description="Acidic residues" evidence="8">
    <location>
        <begin position="1570"/>
        <end position="1590"/>
    </location>
</feature>
<feature type="binding site" evidence="4">
    <location>
        <begin position="749"/>
        <end position="756"/>
    </location>
    <ligand>
        <name>ATP</name>
        <dbReference type="ChEBI" id="CHEBI:30616"/>
    </ligand>
</feature>
<feature type="binding site" evidence="24 41">
    <location>
        <position position="1459"/>
    </location>
    <ligand>
        <name>Zn(2+)</name>
        <dbReference type="ChEBI" id="CHEBI:29105"/>
    </ligand>
</feature>
<feature type="binding site" evidence="24 42">
    <location>
        <position position="1476"/>
    </location>
    <ligand>
        <name>Zn(2+)</name>
        <dbReference type="ChEBI" id="CHEBI:29105"/>
    </ligand>
</feature>
<feature type="modified residue" description="Phosphoserine" evidence="50">
    <location>
        <position position="172"/>
    </location>
</feature>
<feature type="modified residue" description="Phosphoserine" evidence="45 48 49">
    <location>
        <position position="175"/>
    </location>
</feature>
<feature type="modified residue" description="N6-acetyllysine" evidence="1">
    <location>
        <position position="190"/>
    </location>
</feature>
<feature type="modified residue" description="Phosphoserine" evidence="2">
    <location>
        <position position="316"/>
    </location>
</feature>
<feature type="modified residue" description="Phosphoserine" evidence="43 48 49">
    <location>
        <position position="329"/>
    </location>
</feature>
<feature type="modified residue" description="Phosphoserine" evidence="1">
    <location>
        <position position="588"/>
    </location>
</feature>
<feature type="modified residue" description="Phosphoserine" evidence="49 50">
    <location>
        <position position="591"/>
    </location>
</feature>
<feature type="modified residue" description="N6-acetyllysine" evidence="2">
    <location>
        <position position="604"/>
    </location>
</feature>
<feature type="modified residue" description="Phosphoserine" evidence="49">
    <location>
        <position position="666"/>
    </location>
</feature>
<feature type="modified residue" description="Phosphoserine" evidence="1">
    <location>
        <position position="670"/>
    </location>
</feature>
<feature type="modified residue" description="N6-acetyllysine" evidence="46">
    <location>
        <position position="997"/>
    </location>
</feature>
<feature type="modified residue" description="N6-acetyllysine" evidence="46">
    <location>
        <position position="999"/>
    </location>
</feature>
<feature type="modified residue" description="Phosphoserine" evidence="49 50">
    <location>
        <position position="1377"/>
    </location>
</feature>
<feature type="modified residue" description="Phosphoserine" evidence="45 47">
    <location>
        <position position="1512"/>
    </location>
</feature>
<feature type="modified residue" description="Phosphoserine" evidence="45 47">
    <location>
        <position position="1516"/>
    </location>
</feature>
<feature type="modified residue" description="Phosphoserine" evidence="45">
    <location>
        <position position="1528"/>
    </location>
</feature>
<feature type="modified residue" description="Phosphoserine" evidence="43 44 48">
    <location>
        <position position="1568"/>
    </location>
</feature>
<feature type="modified residue" description="Phosphoserine" evidence="43 44 48 50">
    <location>
        <position position="1572"/>
    </location>
</feature>
<feature type="cross-link" description="Glycyl lysine isopeptide (Lys-Gly) (interchain with G-Cter in SUMO2)" evidence="1">
    <location>
        <position position="1302"/>
    </location>
</feature>
<feature type="splice variant" id="VSP_000577" description="In isoform Short." evidence="31">
    <location>
        <begin position="1400"/>
        <end position="1417"/>
    </location>
</feature>
<feature type="sequence variant" id="VAR_085660" description="Found in a patient with non-specific intellectual disability syndrome; likely pathogenic." evidence="23">
    <original>H</original>
    <variation>N</variation>
    <location>
        <position position="484"/>
    </location>
</feature>
<feature type="sequence variant" id="VAR_085661" description="Found in a patient with non-specific intellectual disability syndrome; likely pathogenic." evidence="23">
    <original>N</original>
    <variation>K</variation>
    <location>
        <position position="486"/>
    </location>
</feature>
<feature type="sequence variant" id="VAR_085662" description="In BIS." evidence="23">
    <original>R</original>
    <variation>Q</variation>
    <location>
        <position position="505"/>
    </location>
</feature>
<feature type="sequence variant" id="VAR_085663" description="In BIS." evidence="23">
    <original>G</original>
    <variation>V</variation>
    <location>
        <position position="513"/>
    </location>
</feature>
<feature type="sequence variant" id="VAR_085664" description="In BIS." evidence="23">
    <original>R</original>
    <variation>C</variation>
    <location>
        <position position="525"/>
    </location>
</feature>
<feature type="sequence variant" id="VAR_085665" description="In BIS." evidence="23">
    <original>R</original>
    <variation>H</variation>
    <location>
        <position position="525"/>
    </location>
</feature>
<feature type="sequence variant" id="VAR_085666" description="In BIS." evidence="23">
    <original>L</original>
    <variation>V</variation>
    <location>
        <position position="529"/>
    </location>
</feature>
<feature type="sequence variant" id="VAR_085667" description="In BIS." evidence="23">
    <original>D</original>
    <variation>N</variation>
    <location>
        <position position="534"/>
    </location>
</feature>
<feature type="sequence variant" id="VAR_085668" description="Found in a patient with non-specific intellectual disability syndrome; likely pathogenic." evidence="23">
    <original>L</original>
    <variation>P</variation>
    <location>
        <position position="719"/>
    </location>
</feature>
<feature type="sequence variant" id="VAR_068180" description="In NCBRS; dbSNP:rs281875198." evidence="16">
    <original>G</original>
    <variation>A</variation>
    <location>
        <position position="752"/>
    </location>
</feature>
<feature type="sequence variant" id="VAR_068181" description="In NCBRS; dbSNP:rs281875203." evidence="16">
    <original>K</original>
    <variation>R</variation>
    <location>
        <position position="755"/>
    </location>
</feature>
<feature type="sequence variant" id="VAR_068182" description="In NCBRS; dbSNP:rs281875191." evidence="16">
    <original>T</original>
    <variation>I</variation>
    <location>
        <position position="756"/>
    </location>
</feature>
<feature type="sequence variant" id="VAR_068183" description="In NCBRS; dbSNP:rs281875206." evidence="16">
    <original>D</original>
    <variation>H</variation>
    <location>
        <position position="851"/>
    </location>
</feature>
<feature type="sequence variant" id="VAR_068184" description="In NCBRS; dbSNP:rs281875193." evidence="16">
    <original>E</original>
    <variation>D</variation>
    <location>
        <position position="852"/>
    </location>
</feature>
<feature type="sequence variant" id="VAR_068185" description="In NCBRS; dbSNP:rs281875199." evidence="16 18">
    <original>E</original>
    <variation>K</variation>
    <location>
        <position position="852"/>
    </location>
</feature>
<feature type="sequence variant" id="VAR_068186" description="In NCBRS." evidence="16">
    <original>H</original>
    <variation>N</variation>
    <location>
        <position position="854"/>
    </location>
</feature>
<feature type="sequence variant" id="VAR_068187" description="In NCBRS; dbSNP:rs281875202." evidence="16">
    <original>H</original>
    <variation>R</variation>
    <location>
        <position position="854"/>
    </location>
</feature>
<feature type="sequence variant" id="VAR_068188" description="In NCBRS; dbSNP:rs281875207." evidence="16">
    <original>R</original>
    <variation>G</variation>
    <location>
        <position position="855"/>
    </location>
</feature>
<feature type="sequence variant" id="VAR_076936" description="In NCBRS; dbSNP:rs1471482709." evidence="18">
    <original>R</original>
    <variation>Q</variation>
    <location>
        <position position="855"/>
    </location>
</feature>
<feature type="sequence variant" id="VAR_076937" description="In NCBRS." evidence="18">
    <original>T</original>
    <variation>I</variation>
    <location>
        <position position="880"/>
    </location>
</feature>
<feature type="sequence variant" id="VAR_068189" description="In NCBRS; dbSNP:rs281875194." evidence="16">
    <original>G</original>
    <variation>R</variation>
    <location>
        <position position="881"/>
    </location>
</feature>
<feature type="sequence variant" id="VAR_068190" description="In NCBRS; dbSNP:rs281875185." evidence="16">
    <original>G</original>
    <variation>V</variation>
    <location>
        <position position="881"/>
    </location>
</feature>
<feature type="sequence variant" id="VAR_068191" description="In NCBRS; dbSNP:rs281875188." evidence="16">
    <original>P</original>
    <variation>L</variation>
    <location>
        <position position="883"/>
    </location>
</feature>
<feature type="sequence variant" id="VAR_085669" description="In BIS." evidence="23">
    <original>E</original>
    <variation>V</variation>
    <location>
        <position position="929"/>
    </location>
</feature>
<feature type="sequence variant" id="VAR_085670" description="Found in a patient with non-specific intellectual disability syndrome; likely pathogenic." evidence="23">
    <original>I</original>
    <variation>T</variation>
    <location>
        <position position="932"/>
    </location>
</feature>
<feature type="sequence variant" id="VAR_085671" description="In BIS." evidence="23">
    <original>R</original>
    <variation>C</variation>
    <location>
        <position position="937"/>
    </location>
</feature>
<feature type="sequence variant" id="VAR_085672" description="In BIS." evidence="23">
    <original>R</original>
    <variation>H</variation>
    <location>
        <position position="937"/>
    </location>
</feature>
<feature type="sequence variant" id="VAR_085673" description="In BIS." evidence="23">
    <original>R</original>
    <variation>L</variation>
    <location>
        <position position="937"/>
    </location>
</feature>
<feature type="sequence variant" id="VAR_068192" description="In NCBRS; dbSNP:rs281875190." evidence="16">
    <original>H</original>
    <variation>Y</variation>
    <location>
        <position position="939"/>
    </location>
</feature>
<feature type="sequence variant" id="VAR_068193" description="In NCBRS; dbSNP:rs281875205." evidence="16">
    <original>L</original>
    <variation>F</variation>
    <location>
        <position position="946"/>
    </location>
</feature>
<feature type="sequence variant" id="VAR_068194" description="In NCBRS; dbSNP:rs281875200." evidence="16">
    <original>L</original>
    <variation>S</variation>
    <location>
        <position position="946"/>
    </location>
</feature>
<feature type="sequence variant" id="VAR_085674" description="Found in a patient with non-specific intellectual disability syndrome; likely pathogenic." evidence="23">
    <original>K</original>
    <variation>E</variation>
    <location>
        <position position="1014"/>
    </location>
</feature>
<feature type="sequence variant" id="VAR_068195" description="In NCBRS; dbSNP:rs281875192." evidence="16">
    <original>R</original>
    <variation>C</variation>
    <location>
        <position position="1105"/>
    </location>
</feature>
<feature type="sequence variant" id="VAR_068196" description="In NCBRS; dbSNP:rs281875197." evidence="16">
    <original>R</original>
    <variation>P</variation>
    <location>
        <position position="1105"/>
    </location>
</feature>
<feature type="sequence variant" id="VAR_068197" description="In NCBRS; dbSNP:rs281875195." evidence="16">
    <original>L</original>
    <variation>P</variation>
    <location>
        <position position="1135"/>
    </location>
</feature>
<feature type="sequence variant" id="VAR_068198" description="In NCBRS; dbSNP:rs281875204." evidence="16">
    <original>S</original>
    <variation>R</variation>
    <location>
        <position position="1146"/>
    </location>
</feature>
<feature type="sequence variant" id="VAR_068199" description="In NCBRS; dbSNP:rs281875240." evidence="16">
    <original>D</original>
    <variation>V</variation>
    <location>
        <position position="1158"/>
    </location>
</feature>
<feature type="sequence variant" id="VAR_068200" description="In NCBRS; dbSNP:rs281875184." evidence="16">
    <original>R</original>
    <variation>G</variation>
    <location>
        <position position="1159"/>
    </location>
</feature>
<feature type="sequence variant" id="VAR_068201" description="In NCBRS; dbSNP:rs281875187." evidence="16">
    <original>R</original>
    <variation>L</variation>
    <location>
        <position position="1159"/>
    </location>
</feature>
<feature type="sequence variant" id="VAR_068202" description="In NCBRS; dbSNP:rs281875187." evidence="16">
    <original>R</original>
    <variation>Q</variation>
    <location>
        <position position="1159"/>
    </location>
</feature>
<feature type="sequence variant" id="VAR_068203" description="In NCBRS; dbSNP:rs281875186." evidence="16">
    <original>R</original>
    <variation>H</variation>
    <location>
        <position position="1162"/>
    </location>
</feature>
<feature type="sequence variant" id="VAR_068204" description="In NCBRS; dbSNP:rs281875196." evidence="16">
    <original>A</original>
    <variation>P</variation>
    <location>
        <position position="1188"/>
    </location>
</feature>
<feature type="sequence variant" id="VAR_068205" description="In NCBRS; dbSNP:rs281875189." evidence="16">
    <original>A</original>
    <variation>V</variation>
    <location>
        <position position="1201"/>
    </location>
</feature>
<feature type="sequence variant" id="VAR_068206" description="In NCBRS; dbSNP:rs281875239." evidence="16">
    <original>G</original>
    <variation>C</variation>
    <location>
        <position position="1202"/>
    </location>
</feature>
<feature type="sequence variant" id="VAR_068207" description="In NCBRS; dbSNP:rs281875201." evidence="16">
    <original>D</original>
    <variation>G</variation>
    <location>
        <position position="1205"/>
    </location>
</feature>
<feature type="sequence variant" id="VAR_068208" description="In NCBRS; dbSNP:rs281875238." evidence="16">
    <original>R</original>
    <variation>W</variation>
    <location>
        <position position="1213"/>
    </location>
</feature>
<feature type="sequence variant" id="VAR_078815" description="In NCBRS." evidence="21">
    <original>Q</original>
    <variation>E</variation>
    <location>
        <position position="1241"/>
    </location>
</feature>
<feature type="sequence variant" id="VAR_049501" description="In dbSNP:rs3793510.">
    <original>G</original>
    <variation>A</variation>
    <location>
        <position position="1416"/>
    </location>
</feature>
<feature type="sequence variant" id="VAR_049502" description="Risk factor for schizophrenia in some populations; results in reduced localization to the nucleus; decreased interaction with chromatin; dbSNP:rs2296212." evidence="13">
    <original>D</original>
    <variation>E</variation>
    <location>
        <position position="1546"/>
    </location>
</feature>
<feature type="sequence conflict" description="In Ref. 1; CAA51407." evidence="34" ref="1">
    <location>
        <begin position="237"/>
        <end position="240"/>
    </location>
</feature>
<feature type="sequence conflict" description="In Ref. 2; BAA05142." evidence="34" ref="2">
    <original>Q</original>
    <variation>E</variation>
    <location>
        <position position="394"/>
    </location>
</feature>
<feature type="sequence conflict" description="In Ref. 2; BAA05142." evidence="34" ref="2">
    <original>G</original>
    <variation>S</variation>
    <location>
        <position position="513"/>
    </location>
</feature>
<feature type="sequence conflict" description="In Ref. 1; CAA51407." evidence="34" ref="1">
    <original>R</original>
    <variation>W</variation>
    <location>
        <position position="711"/>
    </location>
</feature>
<feature type="sequence conflict" description="In Ref. 2; BAA05142." evidence="34" ref="2">
    <original>D</original>
    <variation>H</variation>
    <location>
        <position position="1139"/>
    </location>
</feature>
<feature type="sequence conflict" description="In Ref. 1; CAA51407." evidence="34" ref="1">
    <original>V</original>
    <variation>C</variation>
    <location>
        <position position="1394"/>
    </location>
</feature>
<feature type="sequence conflict" description="In Ref. 1; CAA51407." evidence="34" ref="1">
    <original>R</original>
    <variation>S</variation>
    <location>
        <position position="1400"/>
    </location>
</feature>
<feature type="helix" evidence="53">
    <location>
        <begin position="726"/>
        <end position="740"/>
    </location>
</feature>
<feature type="strand" evidence="53">
    <location>
        <begin position="745"/>
        <end position="747"/>
    </location>
</feature>
<feature type="strand" evidence="53">
    <location>
        <begin position="751"/>
        <end position="753"/>
    </location>
</feature>
<feature type="helix" evidence="53">
    <location>
        <begin position="755"/>
        <end position="768"/>
    </location>
</feature>
<feature type="strand" evidence="53">
    <location>
        <begin position="776"/>
        <end position="779"/>
    </location>
</feature>
<feature type="helix" evidence="53">
    <location>
        <begin position="782"/>
        <end position="795"/>
    </location>
</feature>
<feature type="strand" evidence="52">
    <location>
        <begin position="797"/>
        <end position="799"/>
    </location>
</feature>
<feature type="strand" evidence="53">
    <location>
        <begin position="801"/>
        <end position="804"/>
    </location>
</feature>
<feature type="helix" evidence="53">
    <location>
        <begin position="808"/>
        <end position="812"/>
    </location>
</feature>
<feature type="helix" evidence="53">
    <location>
        <begin position="815"/>
        <end position="820"/>
    </location>
</feature>
<feature type="strand" evidence="53">
    <location>
        <begin position="824"/>
        <end position="828"/>
    </location>
</feature>
<feature type="helix" evidence="53">
    <location>
        <begin position="830"/>
        <end position="835"/>
    </location>
</feature>
<feature type="helix" evidence="53">
    <location>
        <begin position="837"/>
        <end position="840"/>
    </location>
</feature>
<feature type="strand" evidence="53">
    <location>
        <begin position="846"/>
        <end position="855"/>
    </location>
</feature>
<feature type="helix" evidence="53">
    <location>
        <begin position="859"/>
        <end position="870"/>
    </location>
</feature>
<feature type="strand" evidence="53">
    <location>
        <begin position="874"/>
        <end position="882"/>
    </location>
</feature>
<feature type="helix" evidence="53">
    <location>
        <begin position="888"/>
        <end position="898"/>
    </location>
</feature>
<feature type="turn" evidence="53">
    <location>
        <begin position="900"/>
        <end position="903"/>
    </location>
</feature>
<feature type="helix" evidence="53">
    <location>
        <begin position="909"/>
        <end position="914"/>
    </location>
</feature>
<feature type="helix" evidence="53">
    <location>
        <begin position="915"/>
        <end position="917"/>
    </location>
</feature>
<feature type="helix" evidence="53">
    <location>
        <begin position="928"/>
        <end position="942"/>
    </location>
</feature>
<feature type="helix" evidence="53">
    <location>
        <begin position="943"/>
        <end position="945"/>
    </location>
</feature>
<feature type="helix" evidence="53">
    <location>
        <begin position="951"/>
        <end position="953"/>
    </location>
</feature>
<feature type="helix" evidence="54">
    <location>
        <begin position="1381"/>
        <end position="1396"/>
    </location>
</feature>
<feature type="strand" evidence="51">
    <location>
        <begin position="1418"/>
        <end position="1420"/>
    </location>
</feature>
<feature type="helix" evidence="54">
    <location>
        <begin position="1425"/>
        <end position="1427"/>
    </location>
</feature>
<feature type="turn" evidence="54">
    <location>
        <begin position="1433"/>
        <end position="1435"/>
    </location>
</feature>
<feature type="helix" evidence="54">
    <location>
        <begin position="1437"/>
        <end position="1442"/>
    </location>
</feature>
<feature type="helix" evidence="54">
    <location>
        <begin position="1449"/>
        <end position="1457"/>
    </location>
</feature>
<feature type="helix" evidence="54">
    <location>
        <begin position="1464"/>
        <end position="1481"/>
    </location>
</feature>
<feature type="helix" evidence="54">
    <location>
        <begin position="1487"/>
        <end position="1507"/>
    </location>
</feature>
<evidence type="ECO:0000250" key="1">
    <source>
        <dbReference type="UniProtKB" id="P51532"/>
    </source>
</evidence>
<evidence type="ECO:0000250" key="2">
    <source>
        <dbReference type="UniProtKB" id="Q6DIC0"/>
    </source>
</evidence>
<evidence type="ECO:0000255" key="3">
    <source>
        <dbReference type="PROSITE-ProRule" id="PRU00035"/>
    </source>
</evidence>
<evidence type="ECO:0000255" key="4">
    <source>
        <dbReference type="PROSITE-ProRule" id="PRU00541"/>
    </source>
</evidence>
<evidence type="ECO:0000255" key="5">
    <source>
        <dbReference type="PROSITE-ProRule" id="PRU00542"/>
    </source>
</evidence>
<evidence type="ECO:0000255" key="6">
    <source>
        <dbReference type="PROSITE-ProRule" id="PRU00549"/>
    </source>
</evidence>
<evidence type="ECO:0000255" key="7">
    <source>
        <dbReference type="PROSITE-ProRule" id="PRU01001"/>
    </source>
</evidence>
<evidence type="ECO:0000256" key="8">
    <source>
        <dbReference type="SAM" id="MobiDB-lite"/>
    </source>
</evidence>
<evidence type="ECO:0000269" key="9">
    <source>
    </source>
</evidence>
<evidence type="ECO:0000269" key="10">
    <source>
    </source>
</evidence>
<evidence type="ECO:0000269" key="11">
    <source>
    </source>
</evidence>
<evidence type="ECO:0000269" key="12">
    <source>
    </source>
</evidence>
<evidence type="ECO:0000269" key="13">
    <source>
    </source>
</evidence>
<evidence type="ECO:0000269" key="14">
    <source>
    </source>
</evidence>
<evidence type="ECO:0000269" key="15">
    <source>
    </source>
</evidence>
<evidence type="ECO:0000269" key="16">
    <source>
    </source>
</evidence>
<evidence type="ECO:0000269" key="17">
    <source>
    </source>
</evidence>
<evidence type="ECO:0000269" key="18">
    <source>
    </source>
</evidence>
<evidence type="ECO:0000269" key="19">
    <source>
    </source>
</evidence>
<evidence type="ECO:0000269" key="20">
    <source>
    </source>
</evidence>
<evidence type="ECO:0000269" key="21">
    <source>
    </source>
</evidence>
<evidence type="ECO:0000269" key="22">
    <source>
    </source>
</evidence>
<evidence type="ECO:0000269" key="23">
    <source>
    </source>
</evidence>
<evidence type="ECO:0000269" key="24">
    <source>
    </source>
</evidence>
<evidence type="ECO:0000303" key="25">
    <source>
    </source>
</evidence>
<evidence type="ECO:0000303" key="26">
    <source>
    </source>
</evidence>
<evidence type="ECO:0000303" key="27">
    <source>
    </source>
</evidence>
<evidence type="ECO:0000303" key="28">
    <source>
    </source>
</evidence>
<evidence type="ECO:0000303" key="29">
    <source>
    </source>
</evidence>
<evidence type="ECO:0000303" key="30">
    <source>
    </source>
</evidence>
<evidence type="ECO:0000303" key="31">
    <source>
    </source>
</evidence>
<evidence type="ECO:0000303" key="32">
    <source>
    </source>
</evidence>
<evidence type="ECO:0000303" key="33">
    <source ref="26"/>
</evidence>
<evidence type="ECO:0000305" key="34"/>
<evidence type="ECO:0000305" key="35">
    <source>
    </source>
</evidence>
<evidence type="ECO:0000312" key="36">
    <source>
        <dbReference type="HGNC" id="HGNC:11098"/>
    </source>
</evidence>
<evidence type="ECO:0007744" key="37">
    <source>
        <dbReference type="PDB" id="2DAT"/>
    </source>
</evidence>
<evidence type="ECO:0007744" key="38">
    <source>
        <dbReference type="PDB" id="6EG2"/>
    </source>
</evidence>
<evidence type="ECO:0007744" key="39">
    <source>
        <dbReference type="PDB" id="6EG3"/>
    </source>
</evidence>
<evidence type="ECO:0007744" key="40">
    <source>
        <dbReference type="PDB" id="9E1K"/>
    </source>
</evidence>
<evidence type="ECO:0007744" key="41">
    <source>
        <dbReference type="PDB" id="9E30"/>
    </source>
</evidence>
<evidence type="ECO:0007744" key="42">
    <source>
        <dbReference type="PDB" id="9E31"/>
    </source>
</evidence>
<evidence type="ECO:0007744" key="43">
    <source>
    </source>
</evidence>
<evidence type="ECO:0007744" key="44">
    <source>
    </source>
</evidence>
<evidence type="ECO:0007744" key="45">
    <source>
    </source>
</evidence>
<evidence type="ECO:0007744" key="46">
    <source>
    </source>
</evidence>
<evidence type="ECO:0007744" key="47">
    <source>
    </source>
</evidence>
<evidence type="ECO:0007744" key="48">
    <source>
    </source>
</evidence>
<evidence type="ECO:0007744" key="49">
    <source>
    </source>
</evidence>
<evidence type="ECO:0007744" key="50">
    <source>
    </source>
</evidence>
<evidence type="ECO:0007829" key="51">
    <source>
        <dbReference type="PDB" id="2DAT"/>
    </source>
</evidence>
<evidence type="ECO:0007829" key="52">
    <source>
        <dbReference type="PDB" id="6EG2"/>
    </source>
</evidence>
<evidence type="ECO:0007829" key="53">
    <source>
        <dbReference type="PDB" id="6EG3"/>
    </source>
</evidence>
<evidence type="ECO:0007829" key="54">
    <source>
        <dbReference type="PDB" id="6HAZ"/>
    </source>
</evidence>
<reference key="1">
    <citation type="journal article" date="1993" name="EMBO J.">
        <title>A human homologue of Saccharomyces cerevisiae SNF2/SWI2 and Drosophila brm genes potentiates transcriptional activation by the glucocorticoid receptor.</title>
        <authorList>
            <person name="Muchardt C."/>
            <person name="Yaniv M."/>
        </authorList>
    </citation>
    <scope>NUCLEOTIDE SEQUENCE [MRNA] (ISOFORM LONG)</scope>
    <source>
        <tissue>Liver</tissue>
    </source>
</reference>
<reference key="2">
    <citation type="journal article" date="1994" name="Nucleic Acids Res.">
        <title>Two human homologues of Saccharomyces cerevisiae SWI2/SNF2 and Drosophila brahma are transcriptional coactivators cooperating with the estrogen receptor and the retinoic acid receptor.</title>
        <authorList>
            <person name="Chiba H."/>
            <person name="Muramatsu M."/>
            <person name="Nomoto A."/>
            <person name="Kato H."/>
        </authorList>
    </citation>
    <scope>NUCLEOTIDE SEQUENCE [MRNA] (ISOFORM SHORT)</scope>
    <source>
        <tissue>Brain</tissue>
    </source>
</reference>
<reference key="3">
    <citation type="journal article" date="2004" name="Nature">
        <title>DNA sequence and analysis of human chromosome 9.</title>
        <authorList>
            <person name="Humphray S.J."/>
            <person name="Oliver K."/>
            <person name="Hunt A.R."/>
            <person name="Plumb R.W."/>
            <person name="Loveland J.E."/>
            <person name="Howe K.L."/>
            <person name="Andrews T.D."/>
            <person name="Searle S."/>
            <person name="Hunt S.E."/>
            <person name="Scott C.E."/>
            <person name="Jones M.C."/>
            <person name="Ainscough R."/>
            <person name="Almeida J.P."/>
            <person name="Ambrose K.D."/>
            <person name="Ashwell R.I.S."/>
            <person name="Babbage A.K."/>
            <person name="Babbage S."/>
            <person name="Bagguley C.L."/>
            <person name="Bailey J."/>
            <person name="Banerjee R."/>
            <person name="Barker D.J."/>
            <person name="Barlow K.F."/>
            <person name="Bates K."/>
            <person name="Beasley H."/>
            <person name="Beasley O."/>
            <person name="Bird C.P."/>
            <person name="Bray-Allen S."/>
            <person name="Brown A.J."/>
            <person name="Brown J.Y."/>
            <person name="Burford D."/>
            <person name="Burrill W."/>
            <person name="Burton J."/>
            <person name="Carder C."/>
            <person name="Carter N.P."/>
            <person name="Chapman J.C."/>
            <person name="Chen Y."/>
            <person name="Clarke G."/>
            <person name="Clark S.Y."/>
            <person name="Clee C.M."/>
            <person name="Clegg S."/>
            <person name="Collier R.E."/>
            <person name="Corby N."/>
            <person name="Crosier M."/>
            <person name="Cummings A.T."/>
            <person name="Davies J."/>
            <person name="Dhami P."/>
            <person name="Dunn M."/>
            <person name="Dutta I."/>
            <person name="Dyer L.W."/>
            <person name="Earthrowl M.E."/>
            <person name="Faulkner L."/>
            <person name="Fleming C.J."/>
            <person name="Frankish A."/>
            <person name="Frankland J.A."/>
            <person name="French L."/>
            <person name="Fricker D.G."/>
            <person name="Garner P."/>
            <person name="Garnett J."/>
            <person name="Ghori J."/>
            <person name="Gilbert J.G.R."/>
            <person name="Glison C."/>
            <person name="Grafham D.V."/>
            <person name="Gribble S."/>
            <person name="Griffiths C."/>
            <person name="Griffiths-Jones S."/>
            <person name="Grocock R."/>
            <person name="Guy J."/>
            <person name="Hall R.E."/>
            <person name="Hammond S."/>
            <person name="Harley J.L."/>
            <person name="Harrison E.S.I."/>
            <person name="Hart E.A."/>
            <person name="Heath P.D."/>
            <person name="Henderson C.D."/>
            <person name="Hopkins B.L."/>
            <person name="Howard P.J."/>
            <person name="Howden P.J."/>
            <person name="Huckle E."/>
            <person name="Johnson C."/>
            <person name="Johnson D."/>
            <person name="Joy A.A."/>
            <person name="Kay M."/>
            <person name="Keenan S."/>
            <person name="Kershaw J.K."/>
            <person name="Kimberley A.M."/>
            <person name="King A."/>
            <person name="Knights A."/>
            <person name="Laird G.K."/>
            <person name="Langford C."/>
            <person name="Lawlor S."/>
            <person name="Leongamornlert D.A."/>
            <person name="Leversha M."/>
            <person name="Lloyd C."/>
            <person name="Lloyd D.M."/>
            <person name="Lovell J."/>
            <person name="Martin S."/>
            <person name="Mashreghi-Mohammadi M."/>
            <person name="Matthews L."/>
            <person name="McLaren S."/>
            <person name="McLay K.E."/>
            <person name="McMurray A."/>
            <person name="Milne S."/>
            <person name="Nickerson T."/>
            <person name="Nisbett J."/>
            <person name="Nordsiek G."/>
            <person name="Pearce A.V."/>
            <person name="Peck A.I."/>
            <person name="Porter K.M."/>
            <person name="Pandian R."/>
            <person name="Pelan S."/>
            <person name="Phillimore B."/>
            <person name="Povey S."/>
            <person name="Ramsey Y."/>
            <person name="Rand V."/>
            <person name="Scharfe M."/>
            <person name="Sehra H.K."/>
            <person name="Shownkeen R."/>
            <person name="Sims S.K."/>
            <person name="Skuce C.D."/>
            <person name="Smith M."/>
            <person name="Steward C.A."/>
            <person name="Swarbreck D."/>
            <person name="Sycamore N."/>
            <person name="Tester J."/>
            <person name="Thorpe A."/>
            <person name="Tracey A."/>
            <person name="Tromans A."/>
            <person name="Thomas D.W."/>
            <person name="Wall M."/>
            <person name="Wallis J.M."/>
            <person name="West A.P."/>
            <person name="Whitehead S.L."/>
            <person name="Willey D.L."/>
            <person name="Williams S.A."/>
            <person name="Wilming L."/>
            <person name="Wray P.W."/>
            <person name="Young L."/>
            <person name="Ashurst J.L."/>
            <person name="Coulson A."/>
            <person name="Blocker H."/>
            <person name="Durbin R.M."/>
            <person name="Sulston J.E."/>
            <person name="Hubbard T."/>
            <person name="Jackson M.J."/>
            <person name="Bentley D.R."/>
            <person name="Beck S."/>
            <person name="Rogers J."/>
            <person name="Dunham I."/>
        </authorList>
    </citation>
    <scope>NUCLEOTIDE SEQUENCE [LARGE SCALE GENOMIC DNA]</scope>
</reference>
<reference key="4">
    <citation type="submission" date="2005-09" db="EMBL/GenBank/DDBJ databases">
        <authorList>
            <person name="Mural R.J."/>
            <person name="Istrail S."/>
            <person name="Sutton G.G."/>
            <person name="Florea L."/>
            <person name="Halpern A.L."/>
            <person name="Mobarry C.M."/>
            <person name="Lippert R."/>
            <person name="Walenz B."/>
            <person name="Shatkay H."/>
            <person name="Dew I."/>
            <person name="Miller J.R."/>
            <person name="Flanigan M.J."/>
            <person name="Edwards N.J."/>
            <person name="Bolanos R."/>
            <person name="Fasulo D."/>
            <person name="Halldorsson B.V."/>
            <person name="Hannenhalli S."/>
            <person name="Turner R."/>
            <person name="Yooseph S."/>
            <person name="Lu F."/>
            <person name="Nusskern D.R."/>
            <person name="Shue B.C."/>
            <person name="Zheng X.H."/>
            <person name="Zhong F."/>
            <person name="Delcher A.L."/>
            <person name="Huson D.H."/>
            <person name="Kravitz S.A."/>
            <person name="Mouchard L."/>
            <person name="Reinert K."/>
            <person name="Remington K.A."/>
            <person name="Clark A.G."/>
            <person name="Waterman M.S."/>
            <person name="Eichler E.E."/>
            <person name="Adams M.D."/>
            <person name="Hunkapiller M.W."/>
            <person name="Myers E.W."/>
            <person name="Venter J.C."/>
        </authorList>
    </citation>
    <scope>NUCLEOTIDE SEQUENCE [LARGE SCALE GENOMIC DNA]</scope>
</reference>
<reference key="5">
    <citation type="journal article" date="2001" name="Proc. Natl. Acad. Sci. U.S.A.">
        <title>The human brm protein is cleaved during apoptosis: the role of cathepsin G.</title>
        <authorList>
            <person name="Biggs J.R."/>
            <person name="Yang J."/>
            <person name="Gullberg U."/>
            <person name="Muchardt C."/>
            <person name="Yaniv M."/>
            <person name="Kraft A.S."/>
        </authorList>
    </citation>
    <scope>SUBCELLULAR LOCATION</scope>
    <scope>PROTEOLYTIC CLEAVAGE</scope>
    <scope>UBIQUITINATION</scope>
</reference>
<reference key="6">
    <citation type="journal article" date="2004" name="Genes Dev.">
        <title>TopBP1 recruits Brg1/Brm to repress E2F1-induced apoptosis, a novel pRb-independent and E2F1-specific control for cell survival.</title>
        <authorList>
            <person name="Liu K."/>
            <person name="Luo Y."/>
            <person name="Lin F.-T."/>
            <person name="Lin W.-C."/>
        </authorList>
    </citation>
    <scope>INTERACTION WITH TOPBP1</scope>
    <scope>FUNCTION</scope>
</reference>
<reference key="7">
    <citation type="journal article" date="2004" name="Genes Dev.">
        <title>Liver tumors escape negative control of proliferation via PI3K/Akt-mediated block of C/EBP alpha growth inhibitory activity.</title>
        <authorList>
            <person name="Wang G.L."/>
            <person name="Iakova P."/>
            <person name="Wilde M."/>
            <person name="Awad S."/>
            <person name="Timchenko N.A."/>
        </authorList>
    </citation>
    <scope>INTERACTION WITH CEBPA</scope>
</reference>
<reference key="8">
    <citation type="journal article" date="2006" name="Cell">
        <title>Global, in vivo, and site-specific phosphorylation dynamics in signaling networks.</title>
        <authorList>
            <person name="Olsen J.V."/>
            <person name="Blagoev B."/>
            <person name="Gnad F."/>
            <person name="Macek B."/>
            <person name="Kumar C."/>
            <person name="Mortensen P."/>
            <person name="Mann M."/>
        </authorList>
    </citation>
    <scope>PHOSPHORYLATION [LARGE SCALE ANALYSIS] AT SER-329; SER-1568 AND SER-1572</scope>
    <scope>IDENTIFICATION BY MASS SPECTROMETRY [LARGE SCALE ANALYSIS]</scope>
    <source>
        <tissue>Cervix carcinoma</tissue>
    </source>
</reference>
<reference key="9">
    <citation type="journal article" date="2007" name="Science">
        <title>ATM and ATR substrate analysis reveals extensive protein networks responsive to DNA damage.</title>
        <authorList>
            <person name="Matsuoka S."/>
            <person name="Ballif B.A."/>
            <person name="Smogorzewska A."/>
            <person name="McDonald E.R. III"/>
            <person name="Hurov K.E."/>
            <person name="Luo J."/>
            <person name="Bakalarski C.E."/>
            <person name="Zhao Z."/>
            <person name="Solimini N."/>
            <person name="Lerenthal Y."/>
            <person name="Shiloh Y."/>
            <person name="Gygi S.P."/>
            <person name="Elledge S.J."/>
        </authorList>
    </citation>
    <scope>IDENTIFICATION BY MASS SPECTROMETRY [LARGE SCALE ANALYSIS]</scope>
    <source>
        <tissue>Embryonic kidney</tissue>
    </source>
</reference>
<reference key="10">
    <citation type="journal article" date="2008" name="Genes Dev.">
        <title>Regulation of muscle development by DPF3, a novel histone acetylation and methylation reader of the BAF chromatin remodeling complex.</title>
        <authorList>
            <person name="Lange M."/>
            <person name="Kaynak B."/>
            <person name="Forster U.B."/>
            <person name="Toenjes M."/>
            <person name="Fischer J.J."/>
            <person name="Grimm C."/>
            <person name="Schlesinger J."/>
            <person name="Just S."/>
            <person name="Dunkel I."/>
            <person name="Krueger T."/>
            <person name="Mebus S."/>
            <person name="Lehrach H."/>
            <person name="Lurz R."/>
            <person name="Gobom J."/>
            <person name="Rottbauer W."/>
            <person name="Abdelilah-Seyfried S."/>
            <person name="Sperling S."/>
        </authorList>
    </citation>
    <scope>IDENTIFICATION IN THE BAF COMPLEX</scope>
    <scope>IDENTIFICATION BY MASS SPECTROMETRY</scope>
</reference>
<reference key="11">
    <citation type="journal article" date="2008" name="Proc. Natl. Acad. Sci. U.S.A.">
        <title>A quantitative atlas of mitotic phosphorylation.</title>
        <authorList>
            <person name="Dephoure N."/>
            <person name="Zhou C."/>
            <person name="Villen J."/>
            <person name="Beausoleil S.A."/>
            <person name="Bakalarski C.E."/>
            <person name="Elledge S.J."/>
            <person name="Gygi S.P."/>
        </authorList>
    </citation>
    <scope>PHOSPHORYLATION [LARGE SCALE ANALYSIS] AT SER-175; SER-1512; SER-1516 AND SER-1528</scope>
    <scope>IDENTIFICATION BY MASS SPECTROMETRY [LARGE SCALE ANALYSIS]</scope>
    <source>
        <tissue>Cervix carcinoma</tissue>
    </source>
</reference>
<reference key="12">
    <citation type="journal article" date="2008" name="Proteomics">
        <title>Large-scale phosphoproteome analysis of human liver tissue by enrichment and fractionation of phosphopeptides with strong anion exchange chromatography.</title>
        <authorList>
            <person name="Han G."/>
            <person name="Ye M."/>
            <person name="Zhou H."/>
            <person name="Jiang X."/>
            <person name="Feng S."/>
            <person name="Jiang X."/>
            <person name="Tian R."/>
            <person name="Wan D."/>
            <person name="Zou H."/>
            <person name="Gu J."/>
        </authorList>
    </citation>
    <scope>PHOSPHORYLATION [LARGE SCALE ANALYSIS] AT SER-1568 AND SER-1572</scope>
    <scope>IDENTIFICATION BY MASS SPECTROMETRY [LARGE SCALE ANALYSIS]</scope>
    <source>
        <tissue>Liver</tissue>
    </source>
</reference>
<reference key="13">
    <citation type="journal article" date="2009" name="Sci. Signal.">
        <title>Quantitative phosphoproteomic analysis of T cell receptor signaling reveals system-wide modulation of protein-protein interactions.</title>
        <authorList>
            <person name="Mayya V."/>
            <person name="Lundgren D.H."/>
            <person name="Hwang S.-I."/>
            <person name="Rezaul K."/>
            <person name="Wu L."/>
            <person name="Eng J.K."/>
            <person name="Rodionov V."/>
            <person name="Han D.K."/>
        </authorList>
    </citation>
    <scope>PHOSPHORYLATION [LARGE SCALE ANALYSIS] AT SER-1512 AND SER-1516</scope>
    <scope>IDENTIFICATION BY MASS SPECTROMETRY [LARGE SCALE ANALYSIS]</scope>
    <source>
        <tissue>Leukemic T-cell</tissue>
    </source>
</reference>
<reference key="14">
    <citation type="journal article" date="2009" name="Science">
        <title>Lysine acetylation targets protein complexes and co-regulates major cellular functions.</title>
        <authorList>
            <person name="Choudhary C."/>
            <person name="Kumar C."/>
            <person name="Gnad F."/>
            <person name="Nielsen M.L."/>
            <person name="Rehman M."/>
            <person name="Walther T.C."/>
            <person name="Olsen J.V."/>
            <person name="Mann M."/>
        </authorList>
    </citation>
    <scope>ACETYLATION [LARGE SCALE ANALYSIS] AT LYS-997 AND LYS-999</scope>
    <scope>IDENTIFICATION BY MASS SPECTROMETRY [LARGE SCALE ANALYSIS]</scope>
</reference>
<reference key="15">
    <citation type="journal article" date="2010" name="EMBO J.">
        <title>Crosstalk between C/EBPbeta phosphorylation, arginine methylation, and SWI/SNF/Mediator implies an indexing transcription factor code.</title>
        <authorList>
            <person name="Kowenz-Leutz E."/>
            <person name="Pless O."/>
            <person name="Dittmar G."/>
            <person name="Knoblich M."/>
            <person name="Leutz A."/>
        </authorList>
    </citation>
    <scope>INTERACTION WITH CEBPB</scope>
</reference>
<reference key="16">
    <citation type="journal article" date="2010" name="J. Biol. Chem.">
        <title>Requiem protein links RelB/p52 and the Brm-type SWI/SNF complex in a noncanonical NF-kappaB pathway.</title>
        <authorList>
            <person name="Tando T."/>
            <person name="Ishizaka A."/>
            <person name="Watanabe H."/>
            <person name="Ito T."/>
            <person name="Iida S."/>
            <person name="Haraguchi T."/>
            <person name="Mizutani T."/>
            <person name="Izumi T."/>
            <person name="Isobe T."/>
            <person name="Akiyama T."/>
            <person name="Inoue J."/>
            <person name="Iba H."/>
        </authorList>
    </citation>
    <scope>INTERACTION WITH DEPF2</scope>
</reference>
<reference key="17">
    <citation type="journal article" date="2010" name="Sci. Signal.">
        <title>Quantitative phosphoproteomics reveals widespread full phosphorylation site occupancy during mitosis.</title>
        <authorList>
            <person name="Olsen J.V."/>
            <person name="Vermeulen M."/>
            <person name="Santamaria A."/>
            <person name="Kumar C."/>
            <person name="Miller M.L."/>
            <person name="Jensen L.J."/>
            <person name="Gnad F."/>
            <person name="Cox J."/>
            <person name="Jensen T.S."/>
            <person name="Nigg E.A."/>
            <person name="Brunak S."/>
            <person name="Mann M."/>
        </authorList>
    </citation>
    <scope>PHOSPHORYLATION [LARGE SCALE ANALYSIS] AT SER-175; SER-329; SER-1568 AND SER-1572</scope>
    <scope>IDENTIFICATION BY MASS SPECTROMETRY [LARGE SCALE ANALYSIS]</scope>
    <source>
        <tissue>Cervix carcinoma</tissue>
    </source>
</reference>
<reference key="18">
    <citation type="journal article" date="2011" name="BMC Syst. Biol.">
        <title>Initial characterization of the human central proteome.</title>
        <authorList>
            <person name="Burkard T.R."/>
            <person name="Planyavsky M."/>
            <person name="Kaupe I."/>
            <person name="Breitwieser F.P."/>
            <person name="Buerckstuemmer T."/>
            <person name="Bennett K.L."/>
            <person name="Superti-Furga G."/>
            <person name="Colinge J."/>
        </authorList>
    </citation>
    <scope>IDENTIFICATION BY MASS SPECTROMETRY [LARGE SCALE ANALYSIS]</scope>
</reference>
<reference key="19">
    <citation type="journal article" date="2012" name="J. Biol. Chem.">
        <title>SWI/SNF chromatin-remodeling factors: multiscale analyses and diverse functions.</title>
        <authorList>
            <person name="Euskirchen G."/>
            <person name="Auerbach R.K."/>
            <person name="Snyder M."/>
        </authorList>
    </citation>
    <scope>REVIEW ON SWI/SNF CHROMATIN REMODELING COMPLEXES</scope>
    <scope>CAUTION</scope>
</reference>
<reference key="20">
    <citation type="journal article" date="2012" name="Nat. Genet.">
        <title>Mutations affecting components of the SWI/SNF complex cause Coffin-Siris syndrome.</title>
        <authorList>
            <person name="Tsurusaki Y."/>
            <person name="Okamoto N."/>
            <person name="Ohashi H."/>
            <person name="Kosho T."/>
            <person name="Imai Y."/>
            <person name="Hibi-Ko Y."/>
            <person name="Kaname T."/>
            <person name="Naritomi K."/>
            <person name="Kawame H."/>
            <person name="Wakui K."/>
            <person name="Fukushima Y."/>
            <person name="Homma T."/>
            <person name="Kato M."/>
            <person name="Hiraki Y."/>
            <person name="Yamagata T."/>
            <person name="Yano S."/>
            <person name="Mizuno S."/>
            <person name="Sakazume S."/>
            <person name="Ishii T."/>
            <person name="Nagai T."/>
            <person name="Shiina M."/>
            <person name="Ogata K."/>
            <person name="Ohta T."/>
            <person name="Niikawa N."/>
            <person name="Miyatake S."/>
            <person name="Okada I."/>
            <person name="Mizuguchi T."/>
            <person name="Doi H."/>
            <person name="Saitsu H."/>
            <person name="Miyake N."/>
            <person name="Matsumoto N."/>
        </authorList>
    </citation>
    <scope>INVOLVEMENT IN NCBRS</scope>
</reference>
<reference key="21">
    <citation type="journal article" date="2013" name="J. Proteome Res.">
        <title>Toward a comprehensive characterization of a human cancer cell phosphoproteome.</title>
        <authorList>
            <person name="Zhou H."/>
            <person name="Di Palma S."/>
            <person name="Preisinger C."/>
            <person name="Peng M."/>
            <person name="Polat A.N."/>
            <person name="Heck A.J."/>
            <person name="Mohammed S."/>
        </authorList>
    </citation>
    <scope>PHOSPHORYLATION [LARGE SCALE ANALYSIS] AT SER-175; SER-329; SER-591; SER-666 AND SER-1377</scope>
    <scope>IDENTIFICATION BY MASS SPECTROMETRY [LARGE SCALE ANALYSIS]</scope>
    <source>
        <tissue>Cervix carcinoma</tissue>
        <tissue>Erythroleukemia</tissue>
    </source>
</reference>
<reference key="22">
    <citation type="journal article" date="2014" name="J. Proteomics">
        <title>An enzyme assisted RP-RPLC approach for in-depth analysis of human liver phosphoproteome.</title>
        <authorList>
            <person name="Bian Y."/>
            <person name="Song C."/>
            <person name="Cheng K."/>
            <person name="Dong M."/>
            <person name="Wang F."/>
            <person name="Huang J."/>
            <person name="Sun D."/>
            <person name="Wang L."/>
            <person name="Ye M."/>
            <person name="Zou H."/>
        </authorList>
    </citation>
    <scope>PHOSPHORYLATION [LARGE SCALE ANALYSIS] AT SER-172; SER-591; SER-1377 AND SER-1572</scope>
    <scope>IDENTIFICATION BY MASS SPECTROMETRY [LARGE SCALE ANALYSIS]</scope>
    <source>
        <tissue>Liver</tissue>
    </source>
</reference>
<reference key="23">
    <citation type="journal article" date="2015" name="Genes Dev.">
        <title>Screen identifies bromodomain protein ZMYND8 in chromatin recognition of transcription-associated DNA damage that promotes homologous recombination.</title>
        <authorList>
            <person name="Gong F."/>
            <person name="Chiu L.Y."/>
            <person name="Cox B."/>
            <person name="Aymard F."/>
            <person name="Clouaire T."/>
            <person name="Leung J.W."/>
            <person name="Cammarata M."/>
            <person name="Perez M."/>
            <person name="Agarwal P."/>
            <person name="Brodbelt J.S."/>
            <person name="Legube G."/>
            <person name="Miller K.M."/>
        </authorList>
    </citation>
    <scope>SUBCELLULAR LOCATION</scope>
</reference>
<reference key="24">
    <citation type="journal article" date="2015" name="PLoS ONE">
        <title>Identification of Novel Proteins Co-Purifying with Cockayne Syndrome Group B (CSB) Reveals Potential Roles for CSB in RNA Metabolism and Chromatin Dynamics.</title>
        <authorList>
            <person name="Nicolai S."/>
            <person name="Filippi S."/>
            <person name="Caputo M."/>
            <person name="Cipak L."/>
            <person name="Gregan J."/>
            <person name="Ammerer G."/>
            <person name="Frontini M."/>
            <person name="Willems D."/>
            <person name="Prantera G."/>
            <person name="Balajee A.S."/>
            <person name="Proietti-De-Santis L."/>
        </authorList>
    </citation>
    <scope>INTERACTION WITH ERCC6</scope>
</reference>
<reference key="25">
    <citation type="journal article" date="2015" name="Sci. Adv.">
        <title>Mammalian SWI/SNF chromatin remodeling complexes and cancer: Mechanistic insights gained from human genomics.</title>
        <authorList>
            <person name="Kadoch C."/>
            <person name="Crabtree G.R."/>
        </authorList>
    </citation>
    <scope>REVIEW ON SWI/SNF CHROMATIN REMODELING COMPLEXES</scope>
    <scope>CAUTION</scope>
</reference>
<reference evidence="37" key="26">
    <citation type="submission" date="2007-01" db="PDB data bank">
        <title>Solution structure of the bromodomain of human SWI/SNF related matrix associated actin dependent regulator of chromatin subfamily A member 2.</title>
        <authorList>
            <consortium name="RIKEN structural genomics initiative (RSGI)"/>
        </authorList>
    </citation>
    <scope>STRUCTURE BY NMR OF 1377-1504</scope>
</reference>
<reference evidence="38 39" key="27">
    <citation type="journal article" date="2018" name="J. Med. Chem.">
        <title>Discovery of Orally Active Inhibitors of Brahma Homolog (BRM)/SMARCA2 ATPase Activity for the Treatment of Brahma Related Gene 1 (BRG1)/SMARCA4-Mutant Cancers.</title>
        <authorList>
            <person name="Papillon J.P.N."/>
            <person name="Nakajima K."/>
            <person name="Adair C.D."/>
            <person name="Hempel J."/>
            <person name="Jouk A.O."/>
            <person name="Karki R.G."/>
            <person name="Mathieu S."/>
            <person name="Moebitz H."/>
            <person name="Ntaganda R."/>
            <person name="Smith T."/>
            <person name="Visser M."/>
            <person name="Hill S.E."/>
            <person name="Hurtado F.K."/>
            <person name="Chenail G."/>
            <person name="Bhang H.C."/>
            <person name="Bric A."/>
            <person name="Xiang K."/>
            <person name="Bushold G."/>
            <person name="Gilbert T."/>
            <person name="Vattay A."/>
            <person name="Dooley J."/>
            <person name="Costa E.A."/>
            <person name="Park I."/>
            <person name="Li A."/>
            <person name="Farley D."/>
            <person name="Lounkine E."/>
            <person name="Yue Q.K."/>
            <person name="Xie X."/>
            <person name="Zhu X."/>
            <person name="Kulathila R."/>
            <person name="King D."/>
            <person name="Hu T."/>
            <person name="Vulic K."/>
            <person name="Cantwell J."/>
            <person name="Luu C."/>
            <person name="Jagani Z."/>
        </authorList>
    </citation>
    <scope>X-RAY CRYSTALLOGRAPHY (2.84 ANGSTROMS) OF 705-955</scope>
    <scope>FUNCTION</scope>
    <scope>CATALYTIC ACTIVITY</scope>
</reference>
<reference evidence="40 41 42" key="28">
    <citation type="journal article" date="2025" name="J. Med. Chem.">
        <title>Discovery of Potent, Highly Selective, and Efficacious SMARCA2 Degraders.</title>
        <authorList>
            <person name="Li Z."/>
            <person name="Harikrishnan L.S."/>
            <person name="Xu G."/>
            <person name="Samanta D."/>
            <person name="Clemente J.C."/>
            <person name="Leng L."/>
            <person name="Tu W."/>
            <person name="Yang L."/>
            <person name="Huang L."/>
            <person name="Wang M."/>
            <person name="Wang S."/>
            <person name="Deng Q."/>
            <person name="Behshad E."/>
            <person name="Nagilla R."/>
            <person name="Orth P."/>
            <person name="Rice C."/>
            <person name="Strickland C."/>
            <person name="Mohammad H.P."/>
            <person name="Priestley E.S."/>
            <person name="Sui Z."/>
        </authorList>
    </citation>
    <scope>X-RAY CRYSTALLOGRAPHY (1.71 ANGSTROMS) OF 1373-1511 IN COMPLEX WITH ZN(2+)</scope>
</reference>
<reference key="29">
    <citation type="journal article" date="2009" name="Hum. Mol. Genet.">
        <title>Involvement of SMARCA2/BRM in the SWI/SNF chromatin-remodeling complex in schizophrenia.</title>
        <authorList>
            <person name="Koga M."/>
            <person name="Ishiguro H."/>
            <person name="Yazaki S."/>
            <person name="Horiuchi Y."/>
            <person name="Arai M."/>
            <person name="Niizato K."/>
            <person name="Iritani S."/>
            <person name="Itokawa M."/>
            <person name="Inada T."/>
            <person name="Iwata N."/>
            <person name="Ozaki N."/>
            <person name="Ujike H."/>
            <person name="Kunugi H."/>
            <person name="Sasaki T."/>
            <person name="Takahashi M."/>
            <person name="Watanabe Y."/>
            <person name="Someya T."/>
            <person name="Kakita A."/>
            <person name="Takahashi H."/>
            <person name="Nawa H."/>
            <person name="Muchardt C."/>
            <person name="Yaniv M."/>
            <person name="Arinami T."/>
        </authorList>
    </citation>
    <scope>PROBABLE INVOLVEMENT IN SCZD</scope>
    <scope>VARIANT GLU-1546</scope>
    <scope>CHARACTERIZATION OF VARIANT GLU-1546</scope>
</reference>
<reference key="30">
    <citation type="journal article" date="2012" name="Nat. Genet.">
        <title>Heterozygous missense mutations in SMARCA2 cause Nicolaides-Baraitser syndrome.</title>
        <authorList>
            <person name="Van Houdt J.K."/>
            <person name="Nowakowska B.A."/>
            <person name="Sousa S.B."/>
            <person name="van Schaik B.D."/>
            <person name="Seuntjens E."/>
            <person name="Avonce N."/>
            <person name="Sifrim A."/>
            <person name="Abdul-Rahman O.A."/>
            <person name="van den Boogaard M.J."/>
            <person name="Bottani A."/>
            <person name="Castori M."/>
            <person name="Cormier-Daire V."/>
            <person name="Deardorff M.A."/>
            <person name="Filges I."/>
            <person name="Fryer A."/>
            <person name="Fryns J.P."/>
            <person name="Gana S."/>
            <person name="Garavelli L."/>
            <person name="Gillessen-Kaesbach G."/>
            <person name="Hall B.D."/>
            <person name="Horn D."/>
            <person name="Huylebroeck D."/>
            <person name="Klapecki J."/>
            <person name="Krajewska-Walasek M."/>
            <person name="Kuechler A."/>
            <person name="Lines M.A."/>
            <person name="Maas S."/>
            <person name="Macdermot K.D."/>
            <person name="McKee S."/>
            <person name="Magee A."/>
            <person name="de Man S.A."/>
            <person name="Moreau Y."/>
            <person name="Morice-Picard F."/>
            <person name="Obersztyn E."/>
            <person name="Pilch J."/>
            <person name="Rosser E."/>
            <person name="Shannon N."/>
            <person name="Stolte-Dijkstra I."/>
            <person name="Van Dijck P."/>
            <person name="Vilain C."/>
            <person name="Vogels A."/>
            <person name="Wakeling E."/>
            <person name="Wieczorek D."/>
            <person name="Wilson L."/>
            <person name="Zuffardi O."/>
            <person name="van Kampen A.H."/>
            <person name="Devriendt K."/>
            <person name="Hennekam R."/>
            <person name="Vermeesch J.R."/>
        </authorList>
    </citation>
    <scope>VARIANTS NCBRS ALA-752; ARG-755; ILE-756; HIS-851; ASP-852; LYS-852; ARG-854; ASN-854; GLY-855; ARG-881; VAL-881; LEU-883; TYR-939; SER-946; PHE-946; CYS-1105; PRO-1105; PRO-1135; ARG-1146; VAL-1158; GLY-1159; LEU-1159; GLN-1159; HIS-1162; PRO-1188; VAL-1201; CYS-1202; GLY-1205 AND TRP-1213</scope>
</reference>
<reference key="31">
    <citation type="journal article" date="2013" name="Hum. Mol. Genet.">
        <title>A comprehensive molecular study on Coffin-Siris and Nicolaides-Baraitser syndromes identifies a broad molecular and clinical spectrum converging on altered chromatin remodeling.</title>
        <authorList>
            <person name="Wieczorek D."/>
            <person name="Boegershausen N."/>
            <person name="Beleggia F."/>
            <person name="Steiner-Haldenstaett S."/>
            <person name="Pohl E."/>
            <person name="Li Y."/>
            <person name="Milz E."/>
            <person name="Martin M."/>
            <person name="Thiele H."/>
            <person name="Altmueller J."/>
            <person name="Alanay Y."/>
            <person name="Kayserili H."/>
            <person name="Klein-Hitpass L."/>
            <person name="Boehringer S."/>
            <person name="Wollstein A."/>
            <person name="Albrecht B."/>
            <person name="Boduroglu K."/>
            <person name="Caliebe A."/>
            <person name="Chrzanowska K."/>
            <person name="Cogulu O."/>
            <person name="Cristofoli F."/>
            <person name="Czeschik J.C."/>
            <person name="Devriendt K."/>
            <person name="Dotti M.T."/>
            <person name="Elcioglu N."/>
            <person name="Gener B."/>
            <person name="Goecke T.O."/>
            <person name="Krajewska-Walasek M."/>
            <person name="Guillen-Navarro E."/>
            <person name="Hayek J."/>
            <person name="Houge G."/>
            <person name="Kilic E."/>
            <person name="Simsek-Kiper P.O."/>
            <person name="Lopez-Gonzalez V."/>
            <person name="Kuechler A."/>
            <person name="Lyonnet S."/>
            <person name="Mari F."/>
            <person name="Marozza A."/>
            <person name="Mathieu Dramard M."/>
            <person name="Mikat B."/>
            <person name="Morin G."/>
            <person name="Morice-Picard F."/>
            <person name="Ozkinay F."/>
            <person name="Rauch A."/>
            <person name="Renieri A."/>
            <person name="Tinschert S."/>
            <person name="Utine G.E."/>
            <person name="Vilain C."/>
            <person name="Vivarelli R."/>
            <person name="Zweier C."/>
            <person name="Nuernberg P."/>
            <person name="Rahmann S."/>
            <person name="Vermeesch J."/>
            <person name="Luedecke H.J."/>
            <person name="Zeschnigk M."/>
            <person name="Wollnik B."/>
        </authorList>
    </citation>
    <scope>VARIANTS NCBRS LYS-852; GLN-855 AND ILE-880</scope>
</reference>
<reference key="32">
    <citation type="journal article" date="2017" name="Am. J. Med. Genet. A">
        <title>New SMARCA2 mutation in a patient with Nicolaides-Baraitser syndrome and myoclonic astatic epilepsy.</title>
        <authorList>
            <consortium name="EuroEPINOMICS RES myoclonic astatic epilepsy working group"/>
            <person name="Tang S."/>
            <person name="Hughes E."/>
            <person name="Lascelles K."/>
            <person name="Simpson M.A."/>
            <person name="Pal D.K."/>
        </authorList>
    </citation>
    <scope>VARIANT NCBRS GLU-1241</scope>
</reference>
<reference key="33">
    <citation type="journal article" date="2020" name="Genet. Med.">
        <title>De novo SMARCA2 variants clustered outside the helicase domain cause a new recognizable syndrome with intellectual disability and blepharophimosis distinct from Nicolaides-Baraitser syndrome.</title>
        <authorList>
            <consortium name="Telethon Undiagnosed Diseases Program"/>
            <person name="Cappuccio G."/>
            <person name="Sayou C."/>
            <person name="Tanno P.L."/>
            <person name="Tisserant E."/>
            <person name="Bruel A.L."/>
            <person name="Kennani S.E."/>
            <person name="Sa J."/>
            <person name="Low K.J."/>
            <person name="Dias C."/>
            <person name="Havlovicova M."/>
            <person name="Hancarova M."/>
            <person name="Eichler E.E."/>
            <person name="Devillard F."/>
            <person name="Moutton S."/>
            <person name="Van-Gils J."/>
            <person name="Dubourg C."/>
            <person name="Odent S."/>
            <person name="Gerard B."/>
            <person name="Piton A."/>
            <person name="Yamamoto T."/>
            <person name="Okamoto N."/>
            <person name="Firth H."/>
            <person name="Metcalfe K."/>
            <person name="Moh A."/>
            <person name="Chapman K.A."/>
            <person name="Aref-Eshghi E."/>
            <person name="Kerkhof J."/>
            <person name="Torella A."/>
            <person name="Nigro V."/>
            <person name="Perrin L."/>
            <person name="Piard J."/>
            <person name="Le Guyader G."/>
            <person name="Jouan T."/>
            <person name="Thauvin-Robinet C."/>
            <person name="Duffourd Y."/>
            <person name="George-Abraham J.K."/>
            <person name="Buchanan C.A."/>
            <person name="Williams D."/>
            <person name="Kini U."/>
            <person name="Wilson K."/>
            <person name="Sousa S.B."/>
            <person name="Hennekam R.C.M."/>
            <person name="Sadikovic B."/>
            <person name="Thevenon J."/>
            <person name="Govin J."/>
            <person name="Vitobello A."/>
            <person name="Brunetti-Pierri N."/>
        </authorList>
    </citation>
    <scope>VARIANTS ASN-484; LYS-486; PRO-719; THR-932 AND GLU-1014</scope>
    <scope>VARIANTS BIS GLN-505; VAL-513; CYS-525; HIS-525; VAL-529; ASN-534; VAL-929; CYS-937; HIS-937 AND LEU-937</scope>
    <scope>INVOLVEMENT IN BIS</scope>
</reference>
<accession>P51531</accession>
<accession>B1ALG3</accession>
<accession>B1ALG4</accession>
<accession>D3DRH4</accession>
<accession>D3DRH5</accession>
<keyword id="KW-0002">3D-structure</keyword>
<keyword id="KW-0007">Acetylation</keyword>
<keyword id="KW-0010">Activator</keyword>
<keyword id="KW-0025">Alternative splicing</keyword>
<keyword id="KW-0103">Bromodomain</keyword>
<keyword id="KW-0225">Disease variant</keyword>
<keyword id="KW-0238">DNA-binding</keyword>
<keyword id="KW-0378">Hydrolase</keyword>
<keyword id="KW-1063">Hypotrichosis</keyword>
<keyword id="KW-0991">Intellectual disability</keyword>
<keyword id="KW-1017">Isopeptide bond</keyword>
<keyword id="KW-0524">Neurogenesis</keyword>
<keyword id="KW-0539">Nucleus</keyword>
<keyword id="KW-0597">Phosphoprotein</keyword>
<keyword id="KW-1267">Proteomics identification</keyword>
<keyword id="KW-1185">Reference proteome</keyword>
<keyword id="KW-1211">Schizophrenia</keyword>
<keyword id="KW-0804">Transcription</keyword>
<keyword id="KW-0805">Transcription regulation</keyword>
<keyword id="KW-0832">Ubl conjugation</keyword>
<sequence length="1590" mass="181279">MSTPTDPGAMPHPGPSPGPGPSPGPILGPSPGPGPSPGSVHSMMGPSPGPPSVSHPMPTMGSTDFPQEGMHQMHKPIDGIHDKGIVEDIHCGSMKGTGMRPPHPGMGPPQSPMDQHSQGYMSPHPSPLGAPEHVSSPMSGGGPTPPQMPPSQPGALIPGDPQAMSQPNRGPSPFSPVQLHQLRAQILAYKMLARGQPLPETLQLAVQGKRTLPGLQQQQQQQQQQQQQQQQQQQQQQQPQQQPPQPQTQQQQQPALVNYNRPSGPGPELSGPSTPQKLPVPAPGGRPSPAPPAAAQPPAAAVPGPSVPQPAPGQPSPVLQLQQKQSRISPIQKPQGLDPVEILQEREYRLQARIAHRIQELENLPGSLPPDLRTKATVELKALRLLNFQRQLRQEVVACMRRDTTLETALNSKAYKRSKRQTLREARMTEKLEKQQKIEQERKRRQKHQEYLNSILQHAKDFKEYHRSVAGKIQKLSKAVATWHANTEREQKKETERIEKERMRRLMAEDEEGYRKLIDQKKDRRLAYLLQQTDEYVANLTNLVWEHKQAQAAKEKKKRRRRKKKAEENAEGGESALGPDGEPIDESSQMSDLPVKVTHTETGKVLFGPEAPKASQLDAWLEMNPGYEVAPRSDSEESDSDYEEEDEEEESSRQETEEKILLDPNSEEVSEKDAKQIIETAKQDVDDEYSMQYSARGSQSYYTVAHAISERVEKQSALLINGTLKHYQLQGLEWMVSLYNNNLNGILADEMGLGKTIQTIALITYLMEHKRLNGPYLIIVPLSTLSNWTYEFDKWAPSVVKISYKGTPAMRRSLVPQLRSGKFNVLLTTYEYIIKDKHILAKIRWKYMIVDEGHRMKNHHCKLTQVLNTHYVAPRRILLTGTPLQNKLPELWALLNFLLPTIFKSCSTFEQWFNAPFAMTGERVDLNEEETILIIRRLHKVLRPFLLRRLKKEVESQLPEKVEYVIKCDMSALQKILYRHMQAKGILLTDGSEKDKKGKGGAKTLMNTIMQLRKICNHPYMFQHIEESFAEHLGYSNGVINGAELYRASGKFELLDRILPKLRATNHRVLLFCQMTSLMTIMEDYFAFRNFLYLRLDGTTKSEDRAALLKKFNEPGSQYFIFLLSTRAGGLGLNLQAADTVVIFDSDWNPHQDLQAQDRAHRIGQQNEVRVLRLCTVNSVEEKILAAAKYKLNVDQKVIQAGMFDQKSSSHERRAFLQAILEHEEENEEEDEVPDDETLNQMIARREEEFDLFMRMDMDRRREDARNPKRKPRLMEEDELPSWIIKDDAEVERLTCEEEEEKIFGRGSRQRRDVDYSDALTEKQWLRAIEDGNLEEMEEEVRLKKRKRRRNVDKDPAKEDVEKAKKRRGRPPAEKLSPNPPKLTKQMNAIIDTVINYKDRCNVEKVPSNSQLEIEGNSSGRQLSEVFIQLPSRKELPEYYELIRKPVDFKKIKERIRNHKYRSLGDLEKDVMLLCHNAQTFNLEGSQIYEDSIVLQSVFKSARQKIAKEEESEDESNEEEEEEDEEESESEAKSVKVKIKLNKKDDKGRDKGKGKKRPNRGKAKPVVSDFDSDEEQDEREQSEGSGTDDE</sequence>
<dbReference type="EC" id="3.6.4.-" evidence="22"/>
<dbReference type="EMBL" id="X72889">
    <property type="protein sequence ID" value="CAA51407.1"/>
    <property type="molecule type" value="mRNA"/>
</dbReference>
<dbReference type="EMBL" id="D26155">
    <property type="protein sequence ID" value="BAA05142.1"/>
    <property type="molecule type" value="mRNA"/>
</dbReference>
<dbReference type="EMBL" id="AL359076">
    <property type="status" value="NOT_ANNOTATED_CDS"/>
    <property type="molecule type" value="Genomic_DNA"/>
</dbReference>
<dbReference type="EMBL" id="AL138755">
    <property type="status" value="NOT_ANNOTATED_CDS"/>
    <property type="molecule type" value="Genomic_DNA"/>
</dbReference>
<dbReference type="EMBL" id="CH471071">
    <property type="protein sequence ID" value="EAW58811.1"/>
    <property type="molecule type" value="Genomic_DNA"/>
</dbReference>
<dbReference type="EMBL" id="CH471071">
    <property type="protein sequence ID" value="EAW58813.1"/>
    <property type="molecule type" value="Genomic_DNA"/>
</dbReference>
<dbReference type="EMBL" id="CH471071">
    <property type="protein sequence ID" value="EAW58814.1"/>
    <property type="molecule type" value="Genomic_DNA"/>
</dbReference>
<dbReference type="EMBL" id="CH471071">
    <property type="protein sequence ID" value="EAW58815.1"/>
    <property type="molecule type" value="Genomic_DNA"/>
</dbReference>
<dbReference type="CCDS" id="CCDS34977.1">
    <molecule id="P51531-1"/>
</dbReference>
<dbReference type="CCDS" id="CCDS34978.1">
    <molecule id="P51531-2"/>
</dbReference>
<dbReference type="PIR" id="S39580">
    <property type="entry name" value="S39580"/>
</dbReference>
<dbReference type="PIR" id="S45251">
    <property type="entry name" value="S45251"/>
</dbReference>
<dbReference type="RefSeq" id="NP_001276325.1">
    <molecule id="P51531-1"/>
    <property type="nucleotide sequence ID" value="NM_001289396.2"/>
</dbReference>
<dbReference type="RefSeq" id="NP_001276326.1">
    <property type="nucleotide sequence ID" value="NM_001289397.1"/>
</dbReference>
<dbReference type="RefSeq" id="NP_003061.3">
    <molecule id="P51531-1"/>
    <property type="nucleotide sequence ID" value="NM_003070.4"/>
</dbReference>
<dbReference type="RefSeq" id="NP_620614.2">
    <molecule id="P51531-2"/>
    <property type="nucleotide sequence ID" value="NM_139045.3"/>
</dbReference>
<dbReference type="PDB" id="2DAT">
    <property type="method" value="NMR"/>
    <property type="chains" value="A=1377-1504"/>
</dbReference>
<dbReference type="PDB" id="4QY4">
    <property type="method" value="X-ray"/>
    <property type="resolution" value="1.97 A"/>
    <property type="chains" value="A/B/C=1373-1511"/>
</dbReference>
<dbReference type="PDB" id="5DKC">
    <property type="method" value="X-ray"/>
    <property type="resolution" value="1.60 A"/>
    <property type="chains" value="A=1373-1511"/>
</dbReference>
<dbReference type="PDB" id="5DKH">
    <property type="method" value="X-ray"/>
    <property type="resolution" value="1.70 A"/>
    <property type="chains" value="A/B/C=1373-1511"/>
</dbReference>
<dbReference type="PDB" id="6EG2">
    <property type="method" value="X-ray"/>
    <property type="resolution" value="2.98 A"/>
    <property type="chains" value="A=705-955"/>
</dbReference>
<dbReference type="PDB" id="6EG3">
    <property type="method" value="X-ray"/>
    <property type="resolution" value="2.84 A"/>
    <property type="chains" value="A=705-955"/>
</dbReference>
<dbReference type="PDB" id="6HAX">
    <property type="method" value="X-ray"/>
    <property type="resolution" value="2.35 A"/>
    <property type="chains" value="A/E=1373-1511"/>
</dbReference>
<dbReference type="PDB" id="6HAY">
    <property type="method" value="X-ray"/>
    <property type="resolution" value="2.24 A"/>
    <property type="chains" value="A/E=1373-1511"/>
</dbReference>
<dbReference type="PDB" id="6HAZ">
    <property type="method" value="X-ray"/>
    <property type="resolution" value="1.31 A"/>
    <property type="chains" value="A/B=1373-1511"/>
</dbReference>
<dbReference type="PDB" id="7S4E">
    <property type="method" value="X-ray"/>
    <property type="resolution" value="2.25 A"/>
    <property type="chains" value="A/E=1373-1511"/>
</dbReference>
<dbReference type="PDB" id="7Z6L">
    <property type="method" value="X-ray"/>
    <property type="resolution" value="2.24 A"/>
    <property type="chains" value="A=1373-1511"/>
</dbReference>
<dbReference type="PDB" id="7Z76">
    <property type="method" value="X-ray"/>
    <property type="resolution" value="1.32 A"/>
    <property type="chains" value="D=1373-1511"/>
</dbReference>
<dbReference type="PDB" id="7Z77">
    <property type="method" value="X-ray"/>
    <property type="resolution" value="1.97 A"/>
    <property type="chains" value="D=1373-1511"/>
</dbReference>
<dbReference type="PDB" id="7Z78">
    <property type="method" value="X-ray"/>
    <property type="resolution" value="1.32 A"/>
    <property type="chains" value="A/B/C=1373-1511"/>
</dbReference>
<dbReference type="PDB" id="8G1P">
    <property type="method" value="X-ray"/>
    <property type="resolution" value="2.70 A"/>
    <property type="chains" value="G/H=1373-1511"/>
</dbReference>
<dbReference type="PDB" id="8QJT">
    <property type="method" value="X-ray"/>
    <property type="resolution" value="2.57 A"/>
    <property type="chains" value="A/B/C=1373-1511"/>
</dbReference>
<dbReference type="PDB" id="9D11">
    <property type="method" value="X-ray"/>
    <property type="resolution" value="1.68 A"/>
    <property type="chains" value="A/B/C=1373-1511"/>
</dbReference>
<dbReference type="PDB" id="9D12">
    <property type="method" value="X-ray"/>
    <property type="resolution" value="2.10 A"/>
    <property type="chains" value="A/B/C=1373-1511"/>
</dbReference>
<dbReference type="PDB" id="9E1K">
    <property type="method" value="X-ray"/>
    <property type="resolution" value="2.26 A"/>
    <property type="chains" value="A/B/C=1373-1511"/>
</dbReference>
<dbReference type="PDB" id="9E30">
    <property type="method" value="X-ray"/>
    <property type="resolution" value="1.71 A"/>
    <property type="chains" value="A/B/C=1373-1511"/>
</dbReference>
<dbReference type="PDB" id="9E31">
    <property type="method" value="X-ray"/>
    <property type="resolution" value="1.96 A"/>
    <property type="chains" value="A/B/C=1373-1511"/>
</dbReference>
<dbReference type="PDBsum" id="2DAT"/>
<dbReference type="PDBsum" id="4QY4"/>
<dbReference type="PDBsum" id="5DKC"/>
<dbReference type="PDBsum" id="5DKH"/>
<dbReference type="PDBsum" id="6EG2"/>
<dbReference type="PDBsum" id="6EG3"/>
<dbReference type="PDBsum" id="6HAX"/>
<dbReference type="PDBsum" id="6HAY"/>
<dbReference type="PDBsum" id="6HAZ"/>
<dbReference type="PDBsum" id="7S4E"/>
<dbReference type="PDBsum" id="7Z6L"/>
<dbReference type="PDBsum" id="7Z76"/>
<dbReference type="PDBsum" id="7Z77"/>
<dbReference type="PDBsum" id="7Z78"/>
<dbReference type="PDBsum" id="8G1P"/>
<dbReference type="PDBsum" id="8QJT"/>
<dbReference type="PDBsum" id="9D11"/>
<dbReference type="PDBsum" id="9D12"/>
<dbReference type="PDBsum" id="9E1K"/>
<dbReference type="PDBsum" id="9E30"/>
<dbReference type="PDBsum" id="9E31"/>
<dbReference type="SASBDB" id="P51531"/>
<dbReference type="SMR" id="P51531"/>
<dbReference type="BioGRID" id="112479">
    <property type="interactions" value="343"/>
</dbReference>
<dbReference type="ComplexPortal" id="CPX-1164">
    <property type="entry name" value="SWI/SNF ATP-dependent chromatin remodeling complex, ACTL6A-ARID1A-SMARCA2 variant"/>
</dbReference>
<dbReference type="ComplexPortal" id="CPX-1194">
    <property type="entry name" value="Muscle cell-specific SWI/SNF ATP-dependent chromatin remodeling complex, ACTL6A-ARID1A-SMARCA2 variant"/>
</dbReference>
<dbReference type="ComplexPortal" id="CPX-1201">
    <property type="entry name" value="Neural progenitor-specific SWI/SNF ATP-dependent chromatin remodeling complex, ARID1A-SMARCA2 variant"/>
</dbReference>
<dbReference type="ComplexPortal" id="CPX-1202">
    <property type="entry name" value="Neuron-specific SWI/SNF ATP-dependent chromatin remodeling complex, ARID1A-SMARCA2 variant"/>
</dbReference>
<dbReference type="ComplexPortal" id="CPX-1203">
    <property type="entry name" value="Brain-specific SWI/SNF ATP-dependent chromatin remodeling complex, ARID1A-SMARCA2 variant"/>
</dbReference>
<dbReference type="ComplexPortal" id="CPX-1205">
    <property type="entry name" value="SWI/SNF ATP-dependent chromatin remodeling complex, ACTL6A-ARID1B-SMARCA2 variant"/>
</dbReference>
<dbReference type="ComplexPortal" id="CPX-1207">
    <property type="entry name" value="SWI/SNF ATP-dependent chromatin remodeling complex, ACTL6B-ARID1A-SMARCA2 variant"/>
</dbReference>
<dbReference type="ComplexPortal" id="CPX-1210">
    <property type="entry name" value="SWI/SNF ATP-dependent chromatin remodeling complex, ACTL6B-ARID1B-SMARCA2 variant"/>
</dbReference>
<dbReference type="ComplexPortal" id="CPX-1213">
    <property type="entry name" value="Neural progenitor-specific SWI/SNF ATP-dependent chromatin remodeling complex, ARID1B-SMARCA2 variant"/>
</dbReference>
<dbReference type="ComplexPortal" id="CPX-1217">
    <property type="entry name" value="Neuron-specific SWI/SNF ATP-dependent chromatin remodeling complex, ARID1B-SMARCA2 variant"/>
</dbReference>
<dbReference type="ComplexPortal" id="CPX-1220">
    <property type="entry name" value="Brain-specific SWI/SNF ATP-dependent chromatin remodeling complex, ARID1B-SMARCA2 variant"/>
</dbReference>
<dbReference type="ComplexPortal" id="CPX-1223">
    <property type="entry name" value="Muscle cell-specific SWI/SNF ATP-dependent chromatin remodeling complex, ACTL6A-ARID1B-SMARCA2 variant"/>
</dbReference>
<dbReference type="ComplexPortal" id="CPX-1225">
    <property type="entry name" value="Muscle cell-specific SWI/SNF ATP-dependent chromatin remodeling complex, ACTL6B-ARID1A-SMARCA2 variant"/>
</dbReference>
<dbReference type="ComplexPortal" id="CPX-1227">
    <property type="entry name" value="Muscle cell-specific SWI/SNF ATP-dependent chromatin remodeling complex, ACTL6B-ARID1B-SMARCA2 variant"/>
</dbReference>
<dbReference type="ComplexPortal" id="CPX-4084">
    <property type="entry name" value="GBAF (SWI/SNF) ATP-dependent chromatin remodeling complex, ACTL6A-BICRA-SMARCA2 variant"/>
</dbReference>
<dbReference type="ComplexPortal" id="CPX-4203">
    <property type="entry name" value="GBAF (SWI/SNF) ATP-dependent chromatin remodeling complex, ACTL6A-BICRAL-SMARCA2 variant"/>
</dbReference>
<dbReference type="ComplexPortal" id="CPX-4223">
    <property type="entry name" value="GBAF (SWI/SNF) ATP-dependent chromatin remodeling complex, ACTL6B-BICRA-SMARCA2 variant"/>
</dbReference>
<dbReference type="ComplexPortal" id="CPX-4224">
    <property type="entry name" value="GBAF (SWI/SNF) ATP-dependent chromatin remodeling complex, ACTL6B-BICRAL-SMARCA2 variant"/>
</dbReference>
<dbReference type="CORUM" id="P51531"/>
<dbReference type="DIP" id="DIP-29005N"/>
<dbReference type="FunCoup" id="P51531">
    <property type="interactions" value="2483"/>
</dbReference>
<dbReference type="IntAct" id="P51531">
    <property type="interactions" value="161"/>
</dbReference>
<dbReference type="MINT" id="P51531"/>
<dbReference type="STRING" id="9606.ENSP00000371638"/>
<dbReference type="BindingDB" id="P51531"/>
<dbReference type="ChEMBL" id="CHEMBL2362979"/>
<dbReference type="GuidetoPHARMACOLOGY" id="2739"/>
<dbReference type="GlyGen" id="P51531">
    <property type="glycosylation" value="8 sites, 1 N-linked glycan (1 site), 1 O-linked glycan (5 sites)"/>
</dbReference>
<dbReference type="iPTMnet" id="P51531"/>
<dbReference type="MetOSite" id="P51531"/>
<dbReference type="PhosphoSitePlus" id="P51531"/>
<dbReference type="SwissPalm" id="P51531"/>
<dbReference type="BioMuta" id="SMARCA2"/>
<dbReference type="DMDM" id="212276472"/>
<dbReference type="jPOST" id="P51531"/>
<dbReference type="MassIVE" id="P51531"/>
<dbReference type="PaxDb" id="9606-ENSP00000265773"/>
<dbReference type="PeptideAtlas" id="P51531"/>
<dbReference type="ProteomicsDB" id="56325">
    <molecule id="P51531-1"/>
</dbReference>
<dbReference type="ProteomicsDB" id="56326">
    <molecule id="P51531-2"/>
</dbReference>
<dbReference type="Pumba" id="P51531"/>
<dbReference type="ABCD" id="P51531">
    <property type="antibodies" value="1 sequenced antibody"/>
</dbReference>
<dbReference type="Antibodypedia" id="9105">
    <property type="antibodies" value="237 antibodies from 32 providers"/>
</dbReference>
<dbReference type="DNASU" id="6595"/>
<dbReference type="Ensembl" id="ENST00000349721.8">
    <molecule id="P51531-1"/>
    <property type="protein sequence ID" value="ENSP00000265773.5"/>
    <property type="gene ID" value="ENSG00000080503.25"/>
</dbReference>
<dbReference type="Ensembl" id="ENST00000357248.8">
    <molecule id="P51531-2"/>
    <property type="protein sequence ID" value="ENSP00000349788.2"/>
    <property type="gene ID" value="ENSG00000080503.25"/>
</dbReference>
<dbReference type="Ensembl" id="ENST00000382194.6">
    <molecule id="P51531-2"/>
    <property type="protein sequence ID" value="ENSP00000371629.1"/>
    <property type="gene ID" value="ENSG00000080503.25"/>
</dbReference>
<dbReference type="Ensembl" id="ENST00000382203.5">
    <molecule id="P51531-1"/>
    <property type="protein sequence ID" value="ENSP00000371638.1"/>
    <property type="gene ID" value="ENSG00000080503.25"/>
</dbReference>
<dbReference type="GeneID" id="6595"/>
<dbReference type="KEGG" id="hsa:6595"/>
<dbReference type="MANE-Select" id="ENST00000349721.8">
    <property type="protein sequence ID" value="ENSP00000265773.5"/>
    <property type="RefSeq nucleotide sequence ID" value="NM_003070.5"/>
    <property type="RefSeq protein sequence ID" value="NP_003061.3"/>
</dbReference>
<dbReference type="UCSC" id="uc003zhc.5">
    <molecule id="P51531-1"/>
    <property type="organism name" value="human"/>
</dbReference>
<dbReference type="AGR" id="HGNC:11098"/>
<dbReference type="CTD" id="6595"/>
<dbReference type="DisGeNET" id="6595"/>
<dbReference type="GeneCards" id="SMARCA2"/>
<dbReference type="GeneReviews" id="SMARCA2"/>
<dbReference type="HGNC" id="HGNC:11098">
    <property type="gene designation" value="SMARCA2"/>
</dbReference>
<dbReference type="HPA" id="ENSG00000080503">
    <property type="expression patterns" value="Low tissue specificity"/>
</dbReference>
<dbReference type="MalaCards" id="SMARCA2"/>
<dbReference type="MIM" id="181500">
    <property type="type" value="phenotype"/>
</dbReference>
<dbReference type="MIM" id="600014">
    <property type="type" value="gene"/>
</dbReference>
<dbReference type="MIM" id="601358">
    <property type="type" value="phenotype"/>
</dbReference>
<dbReference type="MIM" id="619293">
    <property type="type" value="phenotype"/>
</dbReference>
<dbReference type="neXtProt" id="NX_P51531"/>
<dbReference type="OpenTargets" id="ENSG00000080503"/>
<dbReference type="Orphanet" id="3051">
    <property type="disease" value="Nicolaides-Baraitser syndrome"/>
</dbReference>
<dbReference type="Orphanet" id="637013">
    <property type="disease" value="SMARCA2-related blepharophimosis-intellectual disability syndrome"/>
</dbReference>
<dbReference type="PharmGKB" id="PA35948"/>
<dbReference type="VEuPathDB" id="HostDB:ENSG00000080503"/>
<dbReference type="eggNOG" id="KOG0386">
    <property type="taxonomic scope" value="Eukaryota"/>
</dbReference>
<dbReference type="GeneTree" id="ENSGT00940000154821"/>
<dbReference type="HOGENOM" id="CLU_000315_15_0_1"/>
<dbReference type="InParanoid" id="P51531"/>
<dbReference type="OMA" id="VNYISHT"/>
<dbReference type="OrthoDB" id="6017at2759"/>
<dbReference type="PAN-GO" id="P51531">
    <property type="GO annotations" value="4 GO annotations based on evolutionary models"/>
</dbReference>
<dbReference type="PhylomeDB" id="P51531"/>
<dbReference type="TreeFam" id="TF300785"/>
<dbReference type="PathwayCommons" id="P51531"/>
<dbReference type="Reactome" id="R-HSA-3214858">
    <property type="pathway name" value="RMTs methylate histone arginines"/>
</dbReference>
<dbReference type="Reactome" id="R-HSA-8939243">
    <property type="pathway name" value="RUNX1 interacts with co-factors whose precise effect on RUNX1 targets is not known"/>
</dbReference>
<dbReference type="Reactome" id="R-HSA-9824585">
    <property type="pathway name" value="Regulation of MITF-M-dependent genes involved in pigmentation"/>
</dbReference>
<dbReference type="Reactome" id="R-HSA-9845323">
    <property type="pathway name" value="Regulation of endogenous retroelements by Piwi-interacting RNAs (piRNAs)"/>
</dbReference>
<dbReference type="SignaLink" id="P51531"/>
<dbReference type="SIGNOR" id="P51531"/>
<dbReference type="BioGRID-ORCS" id="6595">
    <property type="hits" value="46 hits in 1169 CRISPR screens"/>
</dbReference>
<dbReference type="CD-CODE" id="1A18FFC4">
    <property type="entry name" value="Paraspeckle"/>
</dbReference>
<dbReference type="CD-CODE" id="804901D1">
    <property type="entry name" value="Nuclear speckle"/>
</dbReference>
<dbReference type="CD-CODE" id="91857CE7">
    <property type="entry name" value="Nucleolus"/>
</dbReference>
<dbReference type="ChiTaRS" id="SMARCA2">
    <property type="organism name" value="human"/>
</dbReference>
<dbReference type="EvolutionaryTrace" id="P51531"/>
<dbReference type="GeneWiki" id="SMARCA2"/>
<dbReference type="GenomeRNAi" id="6595"/>
<dbReference type="Pharos" id="P51531">
    <property type="development level" value="Tchem"/>
</dbReference>
<dbReference type="PRO" id="PR:P51531"/>
<dbReference type="Proteomes" id="UP000005640">
    <property type="component" value="Chromosome 9"/>
</dbReference>
<dbReference type="RNAct" id="P51531">
    <property type="molecule type" value="protein"/>
</dbReference>
<dbReference type="Bgee" id="ENSG00000080503">
    <property type="expression patterns" value="Expressed in calcaneal tendon and 210 other cell types or tissues"/>
</dbReference>
<dbReference type="ExpressionAtlas" id="P51531">
    <property type="expression patterns" value="baseline and differential"/>
</dbReference>
<dbReference type="GO" id="GO:0140092">
    <property type="term" value="C:bBAF complex"/>
    <property type="evidence" value="ECO:0000303"/>
    <property type="project" value="ComplexPortal"/>
</dbReference>
<dbReference type="GO" id="GO:0035060">
    <property type="term" value="C:brahma complex"/>
    <property type="evidence" value="ECO:0000303"/>
    <property type="project" value="ComplexPortal"/>
</dbReference>
<dbReference type="GO" id="GO:0000785">
    <property type="term" value="C:chromatin"/>
    <property type="evidence" value="ECO:0000314"/>
    <property type="project" value="BHF-UCL"/>
</dbReference>
<dbReference type="GO" id="GO:0140288">
    <property type="term" value="C:GBAF complex"/>
    <property type="evidence" value="ECO:0000303"/>
    <property type="project" value="ComplexPortal"/>
</dbReference>
<dbReference type="GO" id="GO:0045111">
    <property type="term" value="C:intermediate filament cytoskeleton"/>
    <property type="evidence" value="ECO:0000314"/>
    <property type="project" value="HPA"/>
</dbReference>
<dbReference type="GO" id="GO:0043231">
    <property type="term" value="C:intracellular membrane-bounded organelle"/>
    <property type="evidence" value="ECO:0000314"/>
    <property type="project" value="HPA"/>
</dbReference>
<dbReference type="GO" id="GO:0071565">
    <property type="term" value="C:nBAF complex"/>
    <property type="evidence" value="ECO:0000250"/>
    <property type="project" value="UniProtKB"/>
</dbReference>
<dbReference type="GO" id="GO:0071564">
    <property type="term" value="C:npBAF complex"/>
    <property type="evidence" value="ECO:0000250"/>
    <property type="project" value="UniProtKB"/>
</dbReference>
<dbReference type="GO" id="GO:0005654">
    <property type="term" value="C:nucleoplasm"/>
    <property type="evidence" value="ECO:0000314"/>
    <property type="project" value="HPA"/>
</dbReference>
<dbReference type="GO" id="GO:0005634">
    <property type="term" value="C:nucleus"/>
    <property type="evidence" value="ECO:0000314"/>
    <property type="project" value="UniProtKB"/>
</dbReference>
<dbReference type="GO" id="GO:0016514">
    <property type="term" value="C:SWI/SNF complex"/>
    <property type="evidence" value="ECO:0000314"/>
    <property type="project" value="UniProtKB"/>
</dbReference>
<dbReference type="GO" id="GO:0005524">
    <property type="term" value="F:ATP binding"/>
    <property type="evidence" value="ECO:0007669"/>
    <property type="project" value="UniProtKB-KW"/>
</dbReference>
<dbReference type="GO" id="GO:0008094">
    <property type="term" value="F:ATP-dependent activity, acting on DNA"/>
    <property type="evidence" value="ECO:0000304"/>
    <property type="project" value="BHF-UCL"/>
</dbReference>
<dbReference type="GO" id="GO:0003682">
    <property type="term" value="F:chromatin binding"/>
    <property type="evidence" value="ECO:0000318"/>
    <property type="project" value="GO_Central"/>
</dbReference>
<dbReference type="GO" id="GO:0003677">
    <property type="term" value="F:DNA binding"/>
    <property type="evidence" value="ECO:0000318"/>
    <property type="project" value="GO_Central"/>
</dbReference>
<dbReference type="GO" id="GO:0004386">
    <property type="term" value="F:helicase activity"/>
    <property type="evidence" value="ECO:0000304"/>
    <property type="project" value="ProtInc"/>
</dbReference>
<dbReference type="GO" id="GO:0042393">
    <property type="term" value="F:histone binding"/>
    <property type="evidence" value="ECO:0007669"/>
    <property type="project" value="InterPro"/>
</dbReference>
<dbReference type="GO" id="GO:0016787">
    <property type="term" value="F:hydrolase activity"/>
    <property type="evidence" value="ECO:0007669"/>
    <property type="project" value="UniProtKB-KW"/>
</dbReference>
<dbReference type="GO" id="GO:0140750">
    <property type="term" value="F:nucleosome array spacer activity"/>
    <property type="evidence" value="ECO:0000318"/>
    <property type="project" value="GO_Central"/>
</dbReference>
<dbReference type="GO" id="GO:0000976">
    <property type="term" value="F:transcription cis-regulatory region binding"/>
    <property type="evidence" value="ECO:0000314"/>
    <property type="project" value="UniProtKB"/>
</dbReference>
<dbReference type="GO" id="GO:0003713">
    <property type="term" value="F:transcription coactivator activity"/>
    <property type="evidence" value="ECO:0000314"/>
    <property type="project" value="UniProtKB"/>
</dbReference>
<dbReference type="GO" id="GO:0006338">
    <property type="term" value="P:chromatin remodeling"/>
    <property type="evidence" value="ECO:0000304"/>
    <property type="project" value="BHF-UCL"/>
</dbReference>
<dbReference type="GO" id="GO:0045596">
    <property type="term" value="P:negative regulation of cell differentiation"/>
    <property type="evidence" value="ECO:0000303"/>
    <property type="project" value="ComplexPortal"/>
</dbReference>
<dbReference type="GO" id="GO:0030308">
    <property type="term" value="P:negative regulation of cell growth"/>
    <property type="evidence" value="ECO:0000315"/>
    <property type="project" value="BHF-UCL"/>
</dbReference>
<dbReference type="GO" id="GO:0008285">
    <property type="term" value="P:negative regulation of cell population proliferation"/>
    <property type="evidence" value="ECO:0000314"/>
    <property type="project" value="UniProtKB"/>
</dbReference>
<dbReference type="GO" id="GO:0045892">
    <property type="term" value="P:negative regulation of DNA-templated transcription"/>
    <property type="evidence" value="ECO:0000314"/>
    <property type="project" value="BHF-UCL"/>
</dbReference>
<dbReference type="GO" id="GO:0000122">
    <property type="term" value="P:negative regulation of transcription by RNA polymerase II"/>
    <property type="evidence" value="ECO:0000304"/>
    <property type="project" value="BHF-UCL"/>
</dbReference>
<dbReference type="GO" id="GO:0007399">
    <property type="term" value="P:nervous system development"/>
    <property type="evidence" value="ECO:0007669"/>
    <property type="project" value="UniProtKB-KW"/>
</dbReference>
<dbReference type="GO" id="GO:0045597">
    <property type="term" value="P:positive regulation of cell differentiation"/>
    <property type="evidence" value="ECO:0000303"/>
    <property type="project" value="ComplexPortal"/>
</dbReference>
<dbReference type="GO" id="GO:0008284">
    <property type="term" value="P:positive regulation of cell population proliferation"/>
    <property type="evidence" value="ECO:0000303"/>
    <property type="project" value="ComplexPortal"/>
</dbReference>
<dbReference type="GO" id="GO:0045893">
    <property type="term" value="P:positive regulation of DNA-templated transcription"/>
    <property type="evidence" value="ECO:0000314"/>
    <property type="project" value="UniProtKB"/>
</dbReference>
<dbReference type="GO" id="GO:2000781">
    <property type="term" value="P:positive regulation of double-strand break repair"/>
    <property type="evidence" value="ECO:0000303"/>
    <property type="project" value="ComplexPortal"/>
</dbReference>
<dbReference type="GO" id="GO:0045663">
    <property type="term" value="P:positive regulation of myoblast differentiation"/>
    <property type="evidence" value="ECO:0000303"/>
    <property type="project" value="ComplexPortal"/>
</dbReference>
<dbReference type="GO" id="GO:1902459">
    <property type="term" value="P:positive regulation of stem cell population maintenance"/>
    <property type="evidence" value="ECO:0000303"/>
    <property type="project" value="ComplexPortal"/>
</dbReference>
<dbReference type="GO" id="GO:0045582">
    <property type="term" value="P:positive regulation of T cell differentiation"/>
    <property type="evidence" value="ECO:0000303"/>
    <property type="project" value="ComplexPortal"/>
</dbReference>
<dbReference type="GO" id="GO:0045944">
    <property type="term" value="P:positive regulation of transcription by RNA polymerase II"/>
    <property type="evidence" value="ECO:0000314"/>
    <property type="project" value="BHF-UCL"/>
</dbReference>
<dbReference type="GO" id="GO:0006355">
    <property type="term" value="P:regulation of DNA-templated transcription"/>
    <property type="evidence" value="ECO:0000304"/>
    <property type="project" value="ProtInc"/>
</dbReference>
<dbReference type="GO" id="GO:0070316">
    <property type="term" value="P:regulation of G0 to G1 transition"/>
    <property type="evidence" value="ECO:0000303"/>
    <property type="project" value="ComplexPortal"/>
</dbReference>
<dbReference type="GO" id="GO:2000045">
    <property type="term" value="P:regulation of G1/S transition of mitotic cell cycle"/>
    <property type="evidence" value="ECO:0000303"/>
    <property type="project" value="ComplexPortal"/>
</dbReference>
<dbReference type="GO" id="GO:0030071">
    <property type="term" value="P:regulation of mitotic metaphase/anaphase transition"/>
    <property type="evidence" value="ECO:0000303"/>
    <property type="project" value="ComplexPortal"/>
</dbReference>
<dbReference type="GO" id="GO:2000819">
    <property type="term" value="P:regulation of nucleotide-excision repair"/>
    <property type="evidence" value="ECO:0000303"/>
    <property type="project" value="ComplexPortal"/>
</dbReference>
<dbReference type="GO" id="GO:0006357">
    <property type="term" value="P:regulation of transcription by RNA polymerase II"/>
    <property type="evidence" value="ECO:0000304"/>
    <property type="project" value="ProtInc"/>
</dbReference>
<dbReference type="GO" id="GO:0007286">
    <property type="term" value="P:spermatid development"/>
    <property type="evidence" value="ECO:0007669"/>
    <property type="project" value="Ensembl"/>
</dbReference>
<dbReference type="CDD" id="cd05516">
    <property type="entry name" value="Bromo_SNF2L2"/>
    <property type="match status" value="1"/>
</dbReference>
<dbReference type="CDD" id="cd18063">
    <property type="entry name" value="DEXHc_SMARCA2"/>
    <property type="match status" value="1"/>
</dbReference>
<dbReference type="CDD" id="cd18793">
    <property type="entry name" value="SF2_C_SNF"/>
    <property type="match status" value="1"/>
</dbReference>
<dbReference type="FunFam" id="3.40.50.10810:FF:000008">
    <property type="entry name" value="Chromatin structure-remodeling complex subunit snf21"/>
    <property type="match status" value="1"/>
</dbReference>
<dbReference type="FunFam" id="1.20.920.10:FF:000004">
    <property type="entry name" value="probable global transcription activator SNF2L2 isoform X1"/>
    <property type="match status" value="1"/>
</dbReference>
<dbReference type="FunFam" id="3.40.5.120:FF:000001">
    <property type="entry name" value="probable global transcription activator SNF2L2 isoform X1"/>
    <property type="match status" value="1"/>
</dbReference>
<dbReference type="FunFam" id="1.20.5.170:FF:000089">
    <property type="entry name" value="Putative global transcription activator SNF2L2"/>
    <property type="match status" value="1"/>
</dbReference>
<dbReference type="FunFam" id="3.40.50.300:FF:003020">
    <property type="entry name" value="SNF2-related domain-containing protein"/>
    <property type="match status" value="1"/>
</dbReference>
<dbReference type="Gene3D" id="1.20.5.170">
    <property type="match status" value="1"/>
</dbReference>
<dbReference type="Gene3D" id="3.40.5.120">
    <property type="match status" value="1"/>
</dbReference>
<dbReference type="Gene3D" id="1.20.920.10">
    <property type="entry name" value="Bromodomain-like"/>
    <property type="match status" value="1"/>
</dbReference>
<dbReference type="Gene3D" id="3.40.50.300">
    <property type="entry name" value="P-loop containing nucleotide triphosphate hydrolases"/>
    <property type="match status" value="1"/>
</dbReference>
<dbReference type="Gene3D" id="3.40.50.10810">
    <property type="entry name" value="Tandem AAA-ATPase domain"/>
    <property type="match status" value="1"/>
</dbReference>
<dbReference type="InterPro" id="IPR006576">
    <property type="entry name" value="BRK_domain"/>
</dbReference>
<dbReference type="InterPro" id="IPR037259">
    <property type="entry name" value="BRK_sf"/>
</dbReference>
<dbReference type="InterPro" id="IPR001487">
    <property type="entry name" value="Bromodomain"/>
</dbReference>
<dbReference type="InterPro" id="IPR036427">
    <property type="entry name" value="Bromodomain-like_sf"/>
</dbReference>
<dbReference type="InterPro" id="IPR018359">
    <property type="entry name" value="Bromodomain_CS"/>
</dbReference>
<dbReference type="InterPro" id="IPR014978">
    <property type="entry name" value="Gln-Leu-Gln_QLQ"/>
</dbReference>
<dbReference type="InterPro" id="IPR014001">
    <property type="entry name" value="Helicase_ATP-bd"/>
</dbReference>
<dbReference type="InterPro" id="IPR001650">
    <property type="entry name" value="Helicase_C-like"/>
</dbReference>
<dbReference type="InterPro" id="IPR014012">
    <property type="entry name" value="HSA_dom"/>
</dbReference>
<dbReference type="InterPro" id="IPR027417">
    <property type="entry name" value="P-loop_NTPase"/>
</dbReference>
<dbReference type="InterPro" id="IPR029295">
    <property type="entry name" value="SnAC"/>
</dbReference>
<dbReference type="InterPro" id="IPR038718">
    <property type="entry name" value="SNF2-like_sf"/>
</dbReference>
<dbReference type="InterPro" id="IPR049730">
    <property type="entry name" value="SNF2/RAD54-like_C"/>
</dbReference>
<dbReference type="InterPro" id="IPR000330">
    <property type="entry name" value="SNF2_N"/>
</dbReference>
<dbReference type="PANTHER" id="PTHR10799">
    <property type="entry name" value="SNF2/RAD54 HELICASE FAMILY"/>
    <property type="match status" value="1"/>
</dbReference>
<dbReference type="Pfam" id="PF07533">
    <property type="entry name" value="BRK"/>
    <property type="match status" value="1"/>
</dbReference>
<dbReference type="Pfam" id="PF00439">
    <property type="entry name" value="Bromodomain"/>
    <property type="match status" value="1"/>
</dbReference>
<dbReference type="Pfam" id="PF00271">
    <property type="entry name" value="Helicase_C"/>
    <property type="match status" value="1"/>
</dbReference>
<dbReference type="Pfam" id="PF07529">
    <property type="entry name" value="HSA"/>
    <property type="match status" value="1"/>
</dbReference>
<dbReference type="Pfam" id="PF08880">
    <property type="entry name" value="QLQ"/>
    <property type="match status" value="1"/>
</dbReference>
<dbReference type="Pfam" id="PF14619">
    <property type="entry name" value="SnAC"/>
    <property type="match status" value="1"/>
</dbReference>
<dbReference type="Pfam" id="PF00176">
    <property type="entry name" value="SNF2-rel_dom"/>
    <property type="match status" value="1"/>
</dbReference>
<dbReference type="PRINTS" id="PR00503">
    <property type="entry name" value="BROMODOMAIN"/>
</dbReference>
<dbReference type="SMART" id="SM00592">
    <property type="entry name" value="BRK"/>
    <property type="match status" value="1"/>
</dbReference>
<dbReference type="SMART" id="SM00297">
    <property type="entry name" value="BROMO"/>
    <property type="match status" value="1"/>
</dbReference>
<dbReference type="SMART" id="SM00487">
    <property type="entry name" value="DEXDc"/>
    <property type="match status" value="1"/>
</dbReference>
<dbReference type="SMART" id="SM00490">
    <property type="entry name" value="HELICc"/>
    <property type="match status" value="1"/>
</dbReference>
<dbReference type="SMART" id="SM00573">
    <property type="entry name" value="HSA"/>
    <property type="match status" value="1"/>
</dbReference>
<dbReference type="SMART" id="SM00951">
    <property type="entry name" value="QLQ"/>
    <property type="match status" value="1"/>
</dbReference>
<dbReference type="SMART" id="SM01314">
    <property type="entry name" value="SnAC"/>
    <property type="match status" value="1"/>
</dbReference>
<dbReference type="SUPFAM" id="SSF160481">
    <property type="entry name" value="BRK domain-like"/>
    <property type="match status" value="1"/>
</dbReference>
<dbReference type="SUPFAM" id="SSF47370">
    <property type="entry name" value="Bromodomain"/>
    <property type="match status" value="1"/>
</dbReference>
<dbReference type="SUPFAM" id="SSF52540">
    <property type="entry name" value="P-loop containing nucleoside triphosphate hydrolases"/>
    <property type="match status" value="2"/>
</dbReference>
<dbReference type="PROSITE" id="PS00633">
    <property type="entry name" value="BROMODOMAIN_1"/>
    <property type="match status" value="1"/>
</dbReference>
<dbReference type="PROSITE" id="PS50014">
    <property type="entry name" value="BROMODOMAIN_2"/>
    <property type="match status" value="1"/>
</dbReference>
<dbReference type="PROSITE" id="PS51192">
    <property type="entry name" value="HELICASE_ATP_BIND_1"/>
    <property type="match status" value="1"/>
</dbReference>
<dbReference type="PROSITE" id="PS51194">
    <property type="entry name" value="HELICASE_CTER"/>
    <property type="match status" value="1"/>
</dbReference>
<dbReference type="PROSITE" id="PS51204">
    <property type="entry name" value="HSA"/>
    <property type="match status" value="1"/>
</dbReference>
<dbReference type="PROSITE" id="PS51666">
    <property type="entry name" value="QLQ"/>
    <property type="match status" value="1"/>
</dbReference>
<protein>
    <recommendedName>
        <fullName evidence="36">SWI/SNF-related matrix-associated actin-dependent regulator of chromatin subfamily A member 2</fullName>
        <shortName evidence="26 29 30 33">SAMRCA2</shortName>
        <ecNumber evidence="22">3.6.4.-</ecNumber>
    </recommendedName>
    <alternativeName>
        <fullName>BRG1-associated factor 190B</fullName>
        <shortName>BAF190B</shortName>
    </alternativeName>
    <alternativeName>
        <fullName>Probable global transcription activator SNF2L2</fullName>
    </alternativeName>
    <alternativeName>
        <fullName evidence="31">Protein brahma homolog</fullName>
        <shortName evidence="25 32">hBRM</shortName>
    </alternativeName>
    <alternativeName>
        <fullName evidence="31 32">SNF2-alpha</fullName>
    </alternativeName>
</protein>
<comment type="function">
    <text evidence="2 10 27 28">ATPase involved in transcriptional activation and repression of select genes by chromatin remodeling (alteration of DNA-nucleosome topology). Component of SWI/SNF chromatin remodeling complexes that carry out key enzymatic activities, changing chromatin structure by altering DNA-histone contacts within a nucleosome in an ATP-dependent manner. Binds DNA non-specifically (PubMed:15075294, PubMed:22952240, PubMed:26601204). Belongs to the neural progenitors-specific chromatin remodeling complex (npBAF complex) and the neuron-specific chromatin remodeling complex (nBAF complex). During neural development a switch from a stem/progenitor to a postmitotic chromatin remodeling mechanism occurs as neurons exit the cell cycle and become committed to their adult state. The transition from proliferating neural stem/progenitor cells to postmitotic neurons requires a switch in subunit composition of the npBAF and nBAF complexes. As neural progenitors exit mitosis and differentiate into neurons, npBAF complexes which contain ACTL6A/BAF53A and PHF10/BAF45A, are exchanged for homologous alternative ACTL6B/BAF53B and DPF1/BAF45B or DPF3/BAF45C subunits in neuron-specific complexes (nBAF). The npBAF complex is essential for the self-renewal/proliferative capacity of the multipotent neural stem cells. The nBAF complex along with CREST plays a role regulating the activity of genes essential for dendrite growth (By similarity).</text>
</comment>
<comment type="catalytic activity">
    <reaction evidence="22">
        <text>ATP + H2O = ADP + phosphate + H(+)</text>
        <dbReference type="Rhea" id="RHEA:13065"/>
        <dbReference type="ChEBI" id="CHEBI:15377"/>
        <dbReference type="ChEBI" id="CHEBI:15378"/>
        <dbReference type="ChEBI" id="CHEBI:30616"/>
        <dbReference type="ChEBI" id="CHEBI:43474"/>
        <dbReference type="ChEBI" id="CHEBI:456216"/>
    </reaction>
    <physiologicalReaction direction="left-to-right" evidence="35">
        <dbReference type="Rhea" id="RHEA:13066"/>
    </physiologicalReaction>
</comment>
<comment type="subunit">
    <text evidence="2 10 11 12 14 15 20 27 28">Component of the multiprotein chromatin-remodeling complexes SWI/SNF: SWI/SNF-A (BAF), SWI/SNF-B (PBAF) and related complexes. The canonical complex contains a catalytic subunit (either SMARCA4/BRG1/BAF190A or SMARCA2/BRM/BAF190B, mutually exclusive) and at least SMARCE1, ACTL6A/BAF53, SMARCC1/BAF155, SMARCC2/BAF170, and SMARCB1/SNF5/BAF47. Other subunits specific to each of the complexes may also be present permitting several possible combinations developmentally and tissue specific (Probable). Component of the BAF complex, which includes at least actin (ACTB), ARID1A/BAF250A, ARID1B/BAF250B, SMARCA2/BRM, SMARCA4/BRG1/BAF190A, ACTL6A/BAF53, ACTL6B/BAF53B, SMARCE1/BAF57, SMARCC1/BAF155, SMARCC2/BAF170, SMARCB1/SNF5/INI1, and one or more SMARCD1/BAF60A, SMARCD2/BAF60B, or SMARCD3/BAF60C (PubMed:18765789). In muscle cells, the BAF complex also contains DPF3. Component of neural progenitors-specific chromatin remodeling complex (npBAF complex) composed of at least, ARID1A/BAF250A or ARID1B/BAF250B, SMARCD1/BAF60A, SMARCD3/BAF60C, SMARCA2/BRM/BAF190B, SMARCA4/BRG1/BAF190A, SMARCB1/BAF47, SMARCC1/BAF155, SMARCE1/BAF57, SMARCC2/BAF170, PHF10/BAF45A, ACTL6A/BAF53A and actin. Component of neuron-specific chromatin remodeling complex (nBAF complex) composed of at least, ARID1A/BAF250A or ARID1B/BAF250B, SMARCD1/BAF60A, SMARCD3/BAF60C, SMARCA2/BRM/BAF190B, SMARCA4/BRG1/BAF190A, SMARCB1/BAF47, SMARCC1/BAF155, SMARCE1/BAF57, SMARCC2/BAF170, DPF1/BAF45B, DPF3/BAF45C, ACTL6B/BAF53B and actin. Interacts with PHF10/BAF45A (By similarity). Interacts with CEBPB (when not methylated) (PubMed:20111005). Interacts with TOPBP1 (PubMed:15075294). Interacts with CEBPA (when phosphorylated) (PubMed:15107404). Interacts with DPF2 (PubMed:20460684). Interacts with ERCC6 (PubMed:26030138).</text>
</comment>
<comment type="interaction">
    <interactant intactId="EBI-679562">
        <id>P51531</id>
    </interactant>
    <interactant intactId="EBI-637887">
        <id>O14497</id>
        <label>ARID1A</label>
    </interactant>
    <organismsDiffer>false</organismsDiffer>
    <experiments>6</experiments>
</comment>
<comment type="interaction">
    <interactant intactId="EBI-679562">
        <id>P51531</id>
    </interactant>
    <interactant intactId="EBI-679921">
        <id>Q8NFD5</id>
        <label>ARID1B</label>
    </interactant>
    <organismsDiffer>false</organismsDiffer>
    <experiments>4</experiments>
</comment>
<comment type="interaction">
    <interactant intactId="EBI-679562">
        <id>P51531</id>
    </interactant>
    <interactant intactId="EBI-1364">
        <id>Q07666</id>
        <label>KHDRBS1</label>
    </interactant>
    <organismsDiffer>false</organismsDiffer>
    <experiments>2</experiments>
</comment>
<comment type="interaction">
    <interactant intactId="EBI-679562">
        <id>P51531</id>
    </interactant>
    <interactant intactId="EBI-1189067">
        <id>P51608</id>
        <label>MECP2</label>
    </interactant>
    <organismsDiffer>false</organismsDiffer>
    <experiments>4</experiments>
</comment>
<comment type="interaction">
    <interactant intactId="EBI-679562">
        <id>P51531</id>
    </interactant>
    <interactant intactId="EBI-79165">
        <id>Q9NRD5</id>
        <label>PICK1</label>
    </interactant>
    <organismsDiffer>false</organismsDiffer>
    <experiments>2</experiments>
</comment>
<comment type="interaction">
    <interactant intactId="EBI-679562">
        <id>P51531</id>
    </interactant>
    <interactant intactId="EBI-727004">
        <id>O00560</id>
        <label>SDCBP</label>
    </interactant>
    <organismsDiffer>false</organismsDiffer>
    <experiments>2</experiments>
</comment>
<comment type="interaction">
    <interactant intactId="EBI-679562">
        <id>P51531</id>
    </interactant>
    <interactant intactId="EBI-357418">
        <id>Q8TAQ2</id>
        <label>SMARCC2</label>
    </interactant>
    <organismsDiffer>false</organismsDiffer>
    <experiments>4</experiments>
</comment>
<comment type="interaction">
    <interactant intactId="EBI-679562">
        <id>P51531</id>
    </interactant>
    <interactant intactId="EBI-7333987">
        <id>P04326</id>
        <label>tat</label>
    </interactant>
    <organismsDiffer>true</organismsDiffer>
    <experiments>8</experiments>
</comment>
<comment type="interaction">
    <interactant intactId="EBI-10212306">
        <id>P51531-2</id>
    </interactant>
    <interactant intactId="EBI-10181188">
        <id>Q8N7W2-2</id>
        <label>BEND7</label>
    </interactant>
    <organismsDiffer>false</organismsDiffer>
    <experiments>3</experiments>
</comment>
<comment type="interaction">
    <interactant intactId="EBI-10212306">
        <id>P51531-2</id>
    </interactant>
    <interactant intactId="EBI-727004">
        <id>O00560</id>
        <label>SDCBP</label>
    </interactant>
    <organismsDiffer>false</organismsDiffer>
    <experiments>3</experiments>
</comment>
<comment type="subcellular location">
    <subcellularLocation>
        <location evidence="9 19">Nucleus</location>
    </subcellularLocation>
    <text evidence="19">Localizes to sites of DNA damage.</text>
</comment>
<comment type="alternative products">
    <event type="alternative splicing"/>
    <isoform>
        <id>P51531-1</id>
        <name>Long</name>
        <sequence type="displayed"/>
    </isoform>
    <isoform>
        <id>P51531-2</id>
        <name>Short</name>
        <sequence type="described" ref="VSP_000577"/>
    </isoform>
</comment>
<comment type="PTM">
    <text evidence="9">During apoptosis, cleaved by cathepsin CTSG to produce a 160 kDa cleavage product which localizes to the cytosol.</text>
</comment>
<comment type="PTM">
    <text evidence="9">Ubiquitinated.</text>
</comment>
<comment type="disease" evidence="16 17 18 21">
    <disease id="DI-03463">
        <name>Nicolaides-Baraitser syndrome</name>
        <acronym>NCBRS</acronym>
        <description>A rare disorder characterized by severe intellectual disability with absent or limited speech, seizures, short stature, sparse hair, typical facial characteristics, brachydactyly, prominent finger joints and broad distal phalanges. Some of the features are progressive with time.</description>
        <dbReference type="MIM" id="601358"/>
    </disease>
    <text>The disease is caused by variants affecting the gene represented in this entry.</text>
</comment>
<comment type="disease" evidence="23">
    <disease id="DI-06094">
        <name>Blepharophimosis-impaired intellectual development syndrome</name>
        <acronym>BIS</acronym>
        <description>An autosomal dominant congenital syndrome characterized by blepharophimosis, facial dysmorphism, global development delay, delayed motor skills, impaired intellectual development with poor or absent speech, and behavioral abnormalities in some patients. Additional variable features include distal skeletal anomalies, feeding difficulties with poor growth, respiratory infections, and hypotonia with peripheral spasticity.</description>
        <dbReference type="MIM" id="619293"/>
    </disease>
    <text>The disease is caused by variants affecting the gene represented in this entry.</text>
</comment>
<comment type="disease" evidence="13">
    <disease id="DI-03626">
        <name>Schizophrenia</name>
        <acronym>SCZD</acronym>
        <description>A complex, multifactorial psychotic disorder or group of disorders characterized by disturbances in the form and content of thought (e.g. delusions, hallucinations), in mood (e.g. inappropriate affect), in sense of self and relationship to the external world (e.g. loss of ego boundaries, withdrawal), and in behavior (e.g bizarre or apparently purposeless behavior). Although it affects emotions, it is distinguished from mood disorders in which such disturbances are primary. Similarly, there may be mild impairment of cognitive function, and it is distinguished from the dementias in which disturbed cognitive function is considered primary. Some patients manifest schizophrenic as well as bipolar disorder symptoms and are often given the diagnosis of schizoaffective disorder.</description>
        <dbReference type="MIM" id="181500"/>
    </disease>
    <text>Disease susceptibility may be associated with variants affecting the gene represented in this entry.</text>
</comment>
<comment type="similarity">
    <text evidence="34">Belongs to the SNF2/RAD54 helicase family.</text>
</comment>
<comment type="caution">
    <text evidence="27 28">Like other proteins within the SNF2 family, they do not possess helicase activity but instead remodel chromatin via an ATP-dependent translocation mechanism.</text>
</comment>
<comment type="online information" name="SWI/SNF related, matrix associated, actin dependent regulator of chromatin, subfamily a, member 2 (SMARCA2)">
    <link uri="https://databases.lovd.nl/shared/genes/SMARCA2"/>
    <text>Leiden Open Variation Database (LOVD)</text>
</comment>